<feature type="chain" id="PRO_0000097042" description="Pre-mRNA-splicing factor 8">
    <location>
        <begin position="1"/>
        <end position="2413"/>
    </location>
</feature>
<feature type="domain" description="MPN" evidence="1">
    <location>
        <begin position="2182"/>
        <end position="2311"/>
    </location>
</feature>
<feature type="region of interest" description="Disordered" evidence="2">
    <location>
        <begin position="1"/>
        <end position="60"/>
    </location>
</feature>
<feature type="region of interest" description="SNU114/CWC21 interacting domain (SCwid)">
    <location>
        <begin position="253"/>
        <end position="543"/>
    </location>
</feature>
<feature type="region of interest" description="Reverse transcriptase homology domain">
    <location>
        <begin position="885"/>
        <end position="1375"/>
    </location>
</feature>
<feature type="region of interest" description="Linker">
    <location>
        <begin position="1376"/>
        <end position="1649"/>
    </location>
</feature>
<feature type="region of interest" description="Important for branch point selection">
    <location>
        <begin position="1585"/>
        <end position="1598"/>
    </location>
</feature>
<feature type="region of interest" description="Restriction endonuclease homology domain">
    <location>
        <begin position="1653"/>
        <end position="1824"/>
    </location>
</feature>
<feature type="region of interest" description="RNase H homology domain">
    <location>
        <begin position="1839"/>
        <end position="2092"/>
    </location>
</feature>
<feature type="compositionally biased region" description="Pro residues" evidence="2">
    <location>
        <begin position="1"/>
        <end position="10"/>
    </location>
</feature>
<feature type="compositionally biased region" description="Pro residues" evidence="2">
    <location>
        <begin position="19"/>
        <end position="28"/>
    </location>
</feature>
<feature type="mutagenesis site" description="No effect on viability." evidence="17">
    <original>H</original>
    <variation>S</variation>
    <location>
        <position position="1658"/>
    </location>
</feature>
<feature type="mutagenesis site" description="No effect on viability." evidence="17">
    <original>E</original>
    <variation>Q</variation>
    <location>
        <position position="1684"/>
    </location>
</feature>
<feature type="mutagenesis site" description="No effect on viability." evidence="17">
    <original>H</original>
    <variation>S</variation>
    <location>
        <position position="1687"/>
    </location>
</feature>
<feature type="mutagenesis site" description="No effect on viability." evidence="17">
    <original>D</original>
    <variation>N</variation>
    <location>
        <position position="1700"/>
    </location>
</feature>
<feature type="mutagenesis site" description="No effect on viability." evidence="17">
    <original>D</original>
    <variation>N</variation>
    <location>
        <position position="1735"/>
    </location>
</feature>
<feature type="mutagenesis site" description="Alters protein folding. Severely impaired growth. Strongly reduced growth at 35 degrees Celsius; when associated with A-1854." evidence="10 11 12">
    <original>D</original>
    <variation>A</variation>
    <location>
        <position position="1853"/>
    </location>
</feature>
<feature type="mutagenesis site" description="Reduced growth at 30 degrees Celsius. Strongly reduced growth at 16 degrees Celsius." evidence="10 11 12">
    <original>D</original>
    <variation>N</variation>
    <location>
        <position position="1853"/>
    </location>
</feature>
<feature type="mutagenesis site" description="Reduced growth at 30 degrees Celsius. Strongly reduced growth at 16 degrees Celsius. Strongly reduced growth at 35 degrees Celsius; when associated with A-1853." evidence="11 12">
    <original>D</original>
    <variation>A</variation>
    <location>
        <position position="1854"/>
    </location>
</feature>
<feature type="mutagenesis site" description="Reduced growth at 30 degrees Celsius. Strongly reduced growth at 16 degrees Celsius." evidence="11 12">
    <original>D</original>
    <variation>N</variation>
    <location>
        <position position="1854"/>
    </location>
</feature>
<feature type="mutagenesis site" description="Reduced growth at 30 degrees Celsius. Strongly reduced growth at 16 degrees Celsius." evidence="12">
    <original>T</original>
    <variation>A</variation>
    <location>
        <position position="1855"/>
    </location>
</feature>
<feature type="mutagenesis site" description="Reduced growth at 30 degrees Celsius. Strongly reduced growth at 16 degrees Celsius." evidence="12">
    <original>T</original>
    <variation>A</variation>
    <location>
        <position position="1936"/>
    </location>
</feature>
<feature type="mutagenesis site" description="Severely impaired growth. Reduced growth at 30 degrees Celsius. Strongly reduced growth at 16 degrees Celsius." evidence="12">
    <original>R</original>
    <variation>K</variation>
    <location>
        <position position="1937"/>
    </location>
</feature>
<feature type="sequence conflict" description="In Ref. 2; AAA67044." evidence="20" ref="2">
    <original>PHLYNSRPRSVRIPWYNNPVSCIIQNDEEYDTP</original>
    <variation>LIYIIPGPVQCAYHGIIIQCRVLSRTMRSTTRL</variation>
    <location>
        <begin position="388"/>
        <end position="420"/>
    </location>
</feature>
<feature type="sequence conflict" description="In Ref. 2; AAA67044." evidence="20" ref="2">
    <original>T</original>
    <variation>S</variation>
    <location>
        <position position="1132"/>
    </location>
</feature>
<feature type="sequence conflict" description="In Ref. 2; AAA67044." evidence="20" ref="2">
    <original>W</original>
    <variation>C</variation>
    <location>
        <position position="1575"/>
    </location>
</feature>
<feature type="helix" evidence="37">
    <location>
        <begin position="136"/>
        <end position="145"/>
    </location>
</feature>
<feature type="helix" evidence="37">
    <location>
        <begin position="152"/>
        <end position="154"/>
    </location>
</feature>
<feature type="helix" evidence="37">
    <location>
        <begin position="155"/>
        <end position="165"/>
    </location>
</feature>
<feature type="helix" evidence="37">
    <location>
        <begin position="168"/>
        <end position="177"/>
    </location>
</feature>
<feature type="strand" evidence="37">
    <location>
        <begin position="188"/>
        <end position="194"/>
    </location>
</feature>
<feature type="strand" evidence="37">
    <location>
        <begin position="200"/>
        <end position="202"/>
    </location>
</feature>
<feature type="helix" evidence="37">
    <location>
        <begin position="210"/>
        <end position="230"/>
    </location>
</feature>
<feature type="strand" evidence="37">
    <location>
        <begin position="239"/>
        <end position="242"/>
    </location>
</feature>
<feature type="strand" evidence="34">
    <location>
        <begin position="244"/>
        <end position="246"/>
    </location>
</feature>
<feature type="helix" evidence="37">
    <location>
        <begin position="251"/>
        <end position="254"/>
    </location>
</feature>
<feature type="turn" evidence="37">
    <location>
        <begin position="255"/>
        <end position="257"/>
    </location>
</feature>
<feature type="turn" evidence="37">
    <location>
        <begin position="270"/>
        <end position="273"/>
    </location>
</feature>
<feature type="helix" evidence="37">
    <location>
        <begin position="274"/>
        <end position="277"/>
    </location>
</feature>
<feature type="turn" evidence="37">
    <location>
        <begin position="278"/>
        <end position="281"/>
    </location>
</feature>
<feature type="strand" evidence="37">
    <location>
        <begin position="282"/>
        <end position="284"/>
    </location>
</feature>
<feature type="turn" evidence="37">
    <location>
        <begin position="285"/>
        <end position="288"/>
    </location>
</feature>
<feature type="turn" evidence="37">
    <location>
        <begin position="290"/>
        <end position="292"/>
    </location>
</feature>
<feature type="strand" evidence="37">
    <location>
        <begin position="300"/>
        <end position="302"/>
    </location>
</feature>
<feature type="helix" evidence="37">
    <location>
        <begin position="305"/>
        <end position="314"/>
    </location>
</feature>
<feature type="turn" evidence="37">
    <location>
        <begin position="315"/>
        <end position="318"/>
    </location>
</feature>
<feature type="helix" evidence="37">
    <location>
        <begin position="325"/>
        <end position="328"/>
    </location>
</feature>
<feature type="strand" evidence="34">
    <location>
        <begin position="329"/>
        <end position="332"/>
    </location>
</feature>
<feature type="helix" evidence="37">
    <location>
        <begin position="333"/>
        <end position="342"/>
    </location>
</feature>
<feature type="strand" evidence="34">
    <location>
        <begin position="347"/>
        <end position="349"/>
    </location>
</feature>
<feature type="strand" evidence="34">
    <location>
        <begin position="366"/>
        <end position="368"/>
    </location>
</feature>
<feature type="helix" evidence="37">
    <location>
        <begin position="370"/>
        <end position="372"/>
    </location>
</feature>
<feature type="helix" evidence="37">
    <location>
        <begin position="381"/>
        <end position="386"/>
    </location>
</feature>
<feature type="turn" evidence="37">
    <location>
        <begin position="388"/>
        <end position="390"/>
    </location>
</feature>
<feature type="strand" evidence="33">
    <location>
        <begin position="391"/>
        <end position="393"/>
    </location>
</feature>
<feature type="turn" evidence="33">
    <location>
        <begin position="416"/>
        <end position="418"/>
    </location>
</feature>
<feature type="turn" evidence="37">
    <location>
        <begin position="461"/>
        <end position="464"/>
    </location>
</feature>
<feature type="helix" evidence="37">
    <location>
        <begin position="473"/>
        <end position="481"/>
    </location>
</feature>
<feature type="turn" evidence="37">
    <location>
        <begin position="484"/>
        <end position="487"/>
    </location>
</feature>
<feature type="strand" evidence="37">
    <location>
        <begin position="489"/>
        <end position="492"/>
    </location>
</feature>
<feature type="helix" evidence="37">
    <location>
        <begin position="496"/>
        <end position="498"/>
    </location>
</feature>
<feature type="helix" evidence="37">
    <location>
        <begin position="503"/>
        <end position="507"/>
    </location>
</feature>
<feature type="strand" evidence="27">
    <location>
        <begin position="512"/>
        <end position="514"/>
    </location>
</feature>
<feature type="helix" evidence="37">
    <location>
        <begin position="516"/>
        <end position="534"/>
    </location>
</feature>
<feature type="turn" evidence="27">
    <location>
        <begin position="541"/>
        <end position="544"/>
    </location>
</feature>
<feature type="helix" evidence="37">
    <location>
        <begin position="547"/>
        <end position="552"/>
    </location>
</feature>
<feature type="strand" evidence="37">
    <location>
        <begin position="557"/>
        <end position="563"/>
    </location>
</feature>
<feature type="helix" evidence="37">
    <location>
        <begin position="564"/>
        <end position="585"/>
    </location>
</feature>
<feature type="strand" evidence="37">
    <location>
        <begin position="591"/>
        <end position="593"/>
    </location>
</feature>
<feature type="strand" evidence="37">
    <location>
        <begin position="599"/>
        <end position="603"/>
    </location>
</feature>
<feature type="helix" evidence="37">
    <location>
        <begin position="607"/>
        <end position="612"/>
    </location>
</feature>
<feature type="helix" evidence="37">
    <location>
        <begin position="617"/>
        <end position="640"/>
    </location>
</feature>
<feature type="helix" evidence="37">
    <location>
        <begin position="646"/>
        <end position="658"/>
    </location>
</feature>
<feature type="helix" evidence="37">
    <location>
        <begin position="660"/>
        <end position="663"/>
    </location>
</feature>
<feature type="helix" evidence="37">
    <location>
        <begin position="666"/>
        <end position="669"/>
    </location>
</feature>
<feature type="helix" evidence="37">
    <location>
        <begin position="671"/>
        <end position="673"/>
    </location>
</feature>
<feature type="helix" evidence="37">
    <location>
        <begin position="674"/>
        <end position="691"/>
    </location>
</feature>
<feature type="turn" evidence="37">
    <location>
        <begin position="692"/>
        <end position="695"/>
    </location>
</feature>
<feature type="strand" evidence="37">
    <location>
        <begin position="697"/>
        <end position="699"/>
    </location>
</feature>
<feature type="helix" evidence="37">
    <location>
        <begin position="705"/>
        <end position="735"/>
    </location>
</feature>
<feature type="turn" evidence="37">
    <location>
        <begin position="747"/>
        <end position="749"/>
    </location>
</feature>
<feature type="helix" evidence="37">
    <location>
        <begin position="750"/>
        <end position="769"/>
    </location>
</feature>
<feature type="helix" evidence="33">
    <location>
        <begin position="776"/>
        <end position="778"/>
    </location>
</feature>
<feature type="helix" evidence="37">
    <location>
        <begin position="779"/>
        <end position="782"/>
    </location>
</feature>
<feature type="helix" evidence="37">
    <location>
        <begin position="784"/>
        <end position="795"/>
    </location>
</feature>
<feature type="helix" evidence="37">
    <location>
        <begin position="806"/>
        <end position="835"/>
    </location>
</feature>
<feature type="helix" evidence="37">
    <location>
        <begin position="842"/>
        <end position="870"/>
    </location>
</feature>
<feature type="helix" evidence="25">
    <location>
        <begin position="885"/>
        <end position="892"/>
    </location>
</feature>
<feature type="helix" evidence="25">
    <location>
        <begin position="908"/>
        <end position="924"/>
    </location>
</feature>
<feature type="helix" evidence="25">
    <location>
        <begin position="931"/>
        <end position="945"/>
    </location>
</feature>
<feature type="helix" evidence="25">
    <location>
        <begin position="947"/>
        <end position="960"/>
    </location>
</feature>
<feature type="strand" evidence="25">
    <location>
        <begin position="967"/>
        <end position="969"/>
    </location>
</feature>
<feature type="strand" evidence="37">
    <location>
        <begin position="978"/>
        <end position="983"/>
    </location>
</feature>
<feature type="helix" evidence="25">
    <location>
        <begin position="986"/>
        <end position="1005"/>
    </location>
</feature>
<feature type="strand" evidence="25">
    <location>
        <begin position="1013"/>
        <end position="1015"/>
    </location>
</feature>
<feature type="strand" evidence="34">
    <location>
        <begin position="1017"/>
        <end position="1019"/>
    </location>
</feature>
<feature type="helix" evidence="25">
    <location>
        <begin position="1021"/>
        <end position="1033"/>
    </location>
</feature>
<feature type="turn" evidence="25">
    <location>
        <begin position="1036"/>
        <end position="1039"/>
    </location>
</feature>
<feature type="strand" evidence="34">
    <location>
        <begin position="1042"/>
        <end position="1044"/>
    </location>
</feature>
<feature type="strand" evidence="25">
    <location>
        <begin position="1046"/>
        <end position="1053"/>
    </location>
</feature>
<feature type="turn" evidence="25">
    <location>
        <begin position="1056"/>
        <end position="1060"/>
    </location>
</feature>
<feature type="helix" evidence="25">
    <location>
        <begin position="1063"/>
        <end position="1071"/>
    </location>
</feature>
<feature type="helix" evidence="25">
    <location>
        <begin position="1076"/>
        <end position="1085"/>
    </location>
</feature>
<feature type="strand" evidence="25">
    <location>
        <begin position="1087"/>
        <end position="1092"/>
    </location>
</feature>
<feature type="strand" evidence="25">
    <location>
        <begin position="1095"/>
        <end position="1098"/>
    </location>
</feature>
<feature type="helix" evidence="25">
    <location>
        <begin position="1110"/>
        <end position="1135"/>
    </location>
</feature>
<feature type="strand" evidence="23">
    <location>
        <begin position="1138"/>
        <end position="1140"/>
    </location>
</feature>
<feature type="helix" evidence="25">
    <location>
        <begin position="1150"/>
        <end position="1154"/>
    </location>
</feature>
<feature type="strand" evidence="25">
    <location>
        <begin position="1156"/>
        <end position="1164"/>
    </location>
</feature>
<feature type="strand" evidence="25">
    <location>
        <begin position="1167"/>
        <end position="1174"/>
    </location>
</feature>
<feature type="helix" evidence="25">
    <location>
        <begin position="1176"/>
        <end position="1189"/>
    </location>
</feature>
<feature type="turn" evidence="25">
    <location>
        <begin position="1197"/>
        <end position="1200"/>
    </location>
</feature>
<feature type="strand" evidence="34">
    <location>
        <begin position="1205"/>
        <end position="1207"/>
    </location>
</feature>
<feature type="helix" evidence="25">
    <location>
        <begin position="1209"/>
        <end position="1211"/>
    </location>
</feature>
<feature type="helix" evidence="25">
    <location>
        <begin position="1217"/>
        <end position="1231"/>
    </location>
</feature>
<feature type="turn" evidence="25">
    <location>
        <begin position="1236"/>
        <end position="1238"/>
    </location>
</feature>
<feature type="helix" evidence="25">
    <location>
        <begin position="1243"/>
        <end position="1245"/>
    </location>
</feature>
<feature type="strand" evidence="25">
    <location>
        <begin position="1246"/>
        <end position="1252"/>
    </location>
</feature>
<feature type="strand" evidence="25">
    <location>
        <begin position="1258"/>
        <end position="1262"/>
    </location>
</feature>
<feature type="strand" evidence="25">
    <location>
        <begin position="1265"/>
        <end position="1271"/>
    </location>
</feature>
<feature type="helix" evidence="25">
    <location>
        <begin position="1272"/>
        <end position="1274"/>
    </location>
</feature>
<feature type="strand" evidence="34">
    <location>
        <begin position="1275"/>
        <end position="1277"/>
    </location>
</feature>
<feature type="strand" evidence="25">
    <location>
        <begin position="1283"/>
        <end position="1289"/>
    </location>
</feature>
<feature type="turn" evidence="25">
    <location>
        <begin position="1291"/>
        <end position="1293"/>
    </location>
</feature>
<feature type="strand" evidence="25">
    <location>
        <begin position="1295"/>
        <end position="1304"/>
    </location>
</feature>
<feature type="helix" evidence="25">
    <location>
        <begin position="1306"/>
        <end position="1320"/>
    </location>
</feature>
<feature type="strand" evidence="32">
    <location>
        <begin position="1324"/>
        <end position="1326"/>
    </location>
</feature>
<feature type="helix" evidence="25">
    <location>
        <begin position="1328"/>
        <end position="1346"/>
    </location>
</feature>
<feature type="helix" evidence="25">
    <location>
        <begin position="1348"/>
        <end position="1351"/>
    </location>
</feature>
<feature type="helix" evidence="25">
    <location>
        <begin position="1354"/>
        <end position="1375"/>
    </location>
</feature>
<feature type="helix" evidence="37">
    <location>
        <begin position="1380"/>
        <end position="1382"/>
    </location>
</feature>
<feature type="helix" evidence="25">
    <location>
        <begin position="1385"/>
        <end position="1389"/>
    </location>
</feature>
<feature type="helix" evidence="25">
    <location>
        <begin position="1392"/>
        <end position="1394"/>
    </location>
</feature>
<feature type="strand" evidence="37">
    <location>
        <begin position="1402"/>
        <end position="1405"/>
    </location>
</feature>
<feature type="helix" evidence="25">
    <location>
        <begin position="1409"/>
        <end position="1412"/>
    </location>
</feature>
<feature type="strand" evidence="25">
    <location>
        <begin position="1414"/>
        <end position="1417"/>
    </location>
</feature>
<feature type="strand" evidence="25">
    <location>
        <begin position="1422"/>
        <end position="1425"/>
    </location>
</feature>
<feature type="helix" evidence="25">
    <location>
        <begin position="1427"/>
        <end position="1429"/>
    </location>
</feature>
<feature type="strand" evidence="23">
    <location>
        <begin position="1434"/>
        <end position="1436"/>
    </location>
</feature>
<feature type="helix" evidence="25">
    <location>
        <begin position="1440"/>
        <end position="1443"/>
    </location>
</feature>
<feature type="helix" evidence="25">
    <location>
        <begin position="1447"/>
        <end position="1470"/>
    </location>
</feature>
<feature type="helix" evidence="25">
    <location>
        <begin position="1477"/>
        <end position="1479"/>
    </location>
</feature>
<feature type="turn" evidence="25">
    <location>
        <begin position="1480"/>
        <end position="1482"/>
    </location>
</feature>
<feature type="turn" evidence="25">
    <location>
        <begin position="1487"/>
        <end position="1490"/>
    </location>
</feature>
<feature type="helix" evidence="25">
    <location>
        <begin position="1491"/>
        <end position="1495"/>
    </location>
</feature>
<feature type="helix" evidence="25">
    <location>
        <begin position="1499"/>
        <end position="1502"/>
    </location>
</feature>
<feature type="helix" evidence="25">
    <location>
        <begin position="1508"/>
        <end position="1514"/>
    </location>
</feature>
<feature type="helix" evidence="25">
    <location>
        <begin position="1515"/>
        <end position="1517"/>
    </location>
</feature>
<feature type="helix" evidence="25">
    <location>
        <begin position="1530"/>
        <end position="1533"/>
    </location>
</feature>
<feature type="helix" evidence="25">
    <location>
        <begin position="1540"/>
        <end position="1549"/>
    </location>
</feature>
<feature type="helix" evidence="25">
    <location>
        <begin position="1552"/>
        <end position="1558"/>
    </location>
</feature>
<feature type="strand" evidence="27">
    <location>
        <begin position="1559"/>
        <end position="1561"/>
    </location>
</feature>
<feature type="helix" evidence="25">
    <location>
        <begin position="1563"/>
        <end position="1565"/>
    </location>
</feature>
<feature type="helix" evidence="37">
    <location>
        <begin position="1570"/>
        <end position="1572"/>
    </location>
</feature>
<feature type="helix" evidence="37">
    <location>
        <begin position="1581"/>
        <end position="1585"/>
    </location>
</feature>
<feature type="helix" evidence="37">
    <location>
        <begin position="1592"/>
        <end position="1597"/>
    </location>
</feature>
<feature type="helix" evidence="33">
    <location>
        <begin position="1598"/>
        <end position="1600"/>
    </location>
</feature>
<feature type="helix" evidence="25">
    <location>
        <begin position="1603"/>
        <end position="1614"/>
    </location>
</feature>
<feature type="turn" evidence="25">
    <location>
        <begin position="1617"/>
        <end position="1619"/>
    </location>
</feature>
<feature type="strand" evidence="34">
    <location>
        <begin position="1624"/>
        <end position="1626"/>
    </location>
</feature>
<feature type="strand" evidence="34">
    <location>
        <begin position="1628"/>
        <end position="1630"/>
    </location>
</feature>
<feature type="strand" evidence="25">
    <location>
        <begin position="1633"/>
        <end position="1636"/>
    </location>
</feature>
<feature type="helix" evidence="25">
    <location>
        <begin position="1641"/>
        <end position="1648"/>
    </location>
</feature>
<feature type="turn" evidence="25">
    <location>
        <begin position="1649"/>
        <end position="1652"/>
    </location>
</feature>
<feature type="helix" evidence="25">
    <location>
        <begin position="1653"/>
        <end position="1670"/>
    </location>
</feature>
<feature type="turn" evidence="25">
    <location>
        <begin position="1671"/>
        <end position="1677"/>
    </location>
</feature>
<feature type="strand" evidence="25">
    <location>
        <begin position="1678"/>
        <end position="1683"/>
    </location>
</feature>
<feature type="helix" evidence="25">
    <location>
        <begin position="1690"/>
        <end position="1692"/>
    </location>
</feature>
<feature type="strand" evidence="25">
    <location>
        <begin position="1700"/>
        <end position="1711"/>
    </location>
</feature>
<feature type="strand" evidence="37">
    <location>
        <begin position="1713"/>
        <end position="1716"/>
    </location>
</feature>
<feature type="strand" evidence="25">
    <location>
        <begin position="1726"/>
        <end position="1739"/>
    </location>
</feature>
<feature type="strand" evidence="25">
    <location>
        <begin position="1743"/>
        <end position="1745"/>
    </location>
</feature>
<feature type="helix" evidence="25">
    <location>
        <begin position="1748"/>
        <end position="1759"/>
    </location>
</feature>
<feature type="strand" evidence="25">
    <location>
        <begin position="1763"/>
        <end position="1766"/>
    </location>
</feature>
<feature type="strand" evidence="25">
    <location>
        <begin position="1768"/>
        <end position="1778"/>
    </location>
</feature>
<feature type="turn" evidence="25">
    <location>
        <begin position="1779"/>
        <end position="1782"/>
    </location>
</feature>
<feature type="strand" evidence="25">
    <location>
        <begin position="1783"/>
        <end position="1788"/>
    </location>
</feature>
<feature type="helix" evidence="25">
    <location>
        <begin position="1794"/>
        <end position="1808"/>
    </location>
</feature>
<feature type="helix" evidence="25">
    <location>
        <begin position="1810"/>
        <end position="1822"/>
    </location>
</feature>
<feature type="strand" evidence="34">
    <location>
        <begin position="1825"/>
        <end position="1827"/>
    </location>
</feature>
<feature type="helix" evidence="30">
    <location>
        <begin position="1837"/>
        <end position="1844"/>
    </location>
</feature>
<feature type="strand" evidence="30">
    <location>
        <begin position="1845"/>
        <end position="1847"/>
    </location>
</feature>
<feature type="strand" evidence="30">
    <location>
        <begin position="1849"/>
        <end position="1853"/>
    </location>
</feature>
<feature type="strand" evidence="30">
    <location>
        <begin position="1857"/>
        <end position="1864"/>
    </location>
</feature>
<feature type="strand" evidence="31">
    <location>
        <begin position="1866"/>
        <end position="1868"/>
    </location>
</feature>
<feature type="strand" evidence="30">
    <location>
        <begin position="1870"/>
        <end position="1875"/>
    </location>
</feature>
<feature type="strand" evidence="30">
    <location>
        <begin position="1877"/>
        <end position="1882"/>
    </location>
</feature>
<feature type="turn" evidence="30">
    <location>
        <begin position="1884"/>
        <end position="1886"/>
    </location>
</feature>
<feature type="strand" evidence="30">
    <location>
        <begin position="1888"/>
        <end position="1894"/>
    </location>
</feature>
<feature type="helix" evidence="30">
    <location>
        <begin position="1896"/>
        <end position="1899"/>
    </location>
</feature>
<feature type="helix" evidence="30">
    <location>
        <begin position="1905"/>
        <end position="1923"/>
    </location>
</feature>
<feature type="helix" evidence="30">
    <location>
        <begin position="1926"/>
        <end position="1928"/>
    </location>
</feature>
<feature type="strand" evidence="30">
    <location>
        <begin position="1931"/>
        <end position="1937"/>
    </location>
</feature>
<feature type="helix" evidence="30">
    <location>
        <begin position="1938"/>
        <end position="1940"/>
    </location>
</feature>
<feature type="helix" evidence="30">
    <location>
        <begin position="1941"/>
        <end position="1947"/>
    </location>
</feature>
<feature type="turn" evidence="30">
    <location>
        <begin position="1948"/>
        <end position="1950"/>
    </location>
</feature>
<feature type="strand" evidence="30">
    <location>
        <begin position="1954"/>
        <end position="1957"/>
    </location>
</feature>
<feature type="strand" evidence="29">
    <location>
        <begin position="1959"/>
        <end position="1961"/>
    </location>
</feature>
<feature type="helix" evidence="30">
    <location>
        <begin position="1965"/>
        <end position="1970"/>
    </location>
</feature>
<feature type="helix" evidence="30">
    <location>
        <begin position="1972"/>
        <end position="1980"/>
    </location>
</feature>
<feature type="strand" evidence="30">
    <location>
        <begin position="1985"/>
        <end position="1990"/>
    </location>
</feature>
<feature type="turn" evidence="30">
    <location>
        <begin position="1991"/>
        <end position="1994"/>
    </location>
</feature>
<feature type="helix" evidence="30">
    <location>
        <begin position="1995"/>
        <end position="1997"/>
    </location>
</feature>
<feature type="helix" evidence="30">
    <location>
        <begin position="2001"/>
        <end position="2017"/>
    </location>
</feature>
<feature type="helix" evidence="30">
    <location>
        <begin position="2019"/>
        <end position="2027"/>
    </location>
</feature>
<feature type="strand" evidence="36">
    <location>
        <begin position="2028"/>
        <end position="2032"/>
    </location>
</feature>
<feature type="strand" evidence="30">
    <location>
        <begin position="2039"/>
        <end position="2041"/>
    </location>
</feature>
<feature type="helix" evidence="30">
    <location>
        <begin position="2045"/>
        <end position="2067"/>
    </location>
</feature>
<feature type="helix" evidence="35">
    <location>
        <begin position="2071"/>
        <end position="2073"/>
    </location>
</feature>
<feature type="helix" evidence="35">
    <location>
        <begin position="2076"/>
        <end position="2083"/>
    </location>
</feature>
<feature type="strand" evidence="33">
    <location>
        <begin position="2088"/>
        <end position="2090"/>
    </location>
</feature>
<feature type="helix" evidence="37">
    <location>
        <begin position="2091"/>
        <end position="2106"/>
    </location>
</feature>
<feature type="helix" evidence="21">
    <location>
        <begin position="2149"/>
        <end position="2159"/>
    </location>
</feature>
<feature type="helix" evidence="21">
    <location>
        <begin position="2160"/>
        <end position="2167"/>
    </location>
</feature>
<feature type="strand" evidence="21">
    <location>
        <begin position="2168"/>
        <end position="2171"/>
    </location>
</feature>
<feature type="strand" evidence="26">
    <location>
        <begin position="2178"/>
        <end position="2180"/>
    </location>
</feature>
<feature type="strand" evidence="21">
    <location>
        <begin position="2182"/>
        <end position="2186"/>
    </location>
</feature>
<feature type="helix" evidence="21">
    <location>
        <begin position="2187"/>
        <end position="2195"/>
    </location>
</feature>
<feature type="strand" evidence="21">
    <location>
        <begin position="2199"/>
        <end position="2201"/>
    </location>
</feature>
<feature type="strand" evidence="21">
    <location>
        <begin position="2204"/>
        <end position="2211"/>
    </location>
</feature>
<feature type="strand" evidence="21">
    <location>
        <begin position="2218"/>
        <end position="2225"/>
    </location>
</feature>
<feature type="strand" evidence="21">
    <location>
        <begin position="2229"/>
        <end position="2231"/>
    </location>
</feature>
<feature type="strand" evidence="21">
    <location>
        <begin position="2236"/>
        <end position="2238"/>
    </location>
</feature>
<feature type="strand" evidence="23">
    <location>
        <begin position="2245"/>
        <end position="2247"/>
    </location>
</feature>
<feature type="strand" evidence="21">
    <location>
        <begin position="2254"/>
        <end position="2264"/>
    </location>
</feature>
<feature type="helix" evidence="21">
    <location>
        <begin position="2271"/>
        <end position="2281"/>
    </location>
</feature>
<feature type="turn" evidence="21">
    <location>
        <begin position="2282"/>
        <end position="2284"/>
    </location>
</feature>
<feature type="strand" evidence="21">
    <location>
        <begin position="2289"/>
        <end position="2296"/>
    </location>
</feature>
<feature type="strand" evidence="21">
    <location>
        <begin position="2299"/>
        <end position="2307"/>
    </location>
</feature>
<feature type="helix" evidence="21">
    <location>
        <begin position="2309"/>
        <end position="2316"/>
    </location>
</feature>
<feature type="turn" evidence="22">
    <location>
        <begin position="2317"/>
        <end position="2320"/>
    </location>
</feature>
<feature type="turn" evidence="24">
    <location>
        <begin position="2323"/>
        <end position="2325"/>
    </location>
</feature>
<feature type="helix" evidence="21">
    <location>
        <begin position="2331"/>
        <end position="2333"/>
    </location>
</feature>
<feature type="strand" evidence="21">
    <location>
        <begin position="2334"/>
        <end position="2345"/>
    </location>
</feature>
<feature type="strand" evidence="21">
    <location>
        <begin position="2348"/>
        <end position="2352"/>
    </location>
</feature>
<feature type="helix" evidence="25">
    <location>
        <begin position="2360"/>
        <end position="2362"/>
    </location>
</feature>
<feature type="helix" evidence="21">
    <location>
        <begin position="2363"/>
        <end position="2365"/>
    </location>
</feature>
<feature type="strand" evidence="21">
    <location>
        <begin position="2374"/>
        <end position="2376"/>
    </location>
</feature>
<feature type="helix" evidence="21">
    <location>
        <begin position="2385"/>
        <end position="2387"/>
    </location>
</feature>
<feature type="helix" evidence="26">
    <location>
        <begin position="2389"/>
        <end position="2396"/>
    </location>
</feature>
<feature type="turn" evidence="28">
    <location>
        <begin position="2406"/>
        <end position="2408"/>
    </location>
</feature>
<reference key="1">
    <citation type="journal article" date="1995" name="Yeast">
        <title>Extraordinary sequence conservation of the PRP8 splicing factor.</title>
        <authorList>
            <person name="Hodges P.E."/>
            <person name="Jackson S.P."/>
            <person name="Brown J.D."/>
            <person name="Beggs J.D."/>
        </authorList>
    </citation>
    <scope>NUCLEOTIDE SEQUENCE [GENOMIC DNA]</scope>
</reference>
<reference key="2">
    <citation type="journal article" date="1994" name="Nucleic Acids Res.">
        <title>The budding yeast U5 snRNP Prp8 is a highly conserved protein which links RNA splicing with cell cycle progression.</title>
        <authorList>
            <person name="Shea J.E."/>
            <person name="Toyn J.H."/>
            <person name="Johnston L.H."/>
        </authorList>
    </citation>
    <scope>NUCLEOTIDE SEQUENCE [GENOMIC DNA]</scope>
</reference>
<reference key="3">
    <citation type="journal article" date="1994" name="Science">
        <title>Complete nucleotide sequence of Saccharomyces cerevisiae chromosome VIII.</title>
        <authorList>
            <person name="Johnston M."/>
            <person name="Andrews S."/>
            <person name="Brinkman R."/>
            <person name="Cooper J."/>
            <person name="Ding H."/>
            <person name="Dover J."/>
            <person name="Du Z."/>
            <person name="Favello A."/>
            <person name="Fulton L."/>
            <person name="Gattung S."/>
            <person name="Geisel C."/>
            <person name="Kirsten J."/>
            <person name="Kucaba T."/>
            <person name="Hillier L.W."/>
            <person name="Jier M."/>
            <person name="Johnston L."/>
            <person name="Langston Y."/>
            <person name="Latreille P."/>
            <person name="Louis E.J."/>
            <person name="Macri C."/>
            <person name="Mardis E."/>
            <person name="Menezes S."/>
            <person name="Mouser L."/>
            <person name="Nhan M."/>
            <person name="Rifkin L."/>
            <person name="Riles L."/>
            <person name="St Peter H."/>
            <person name="Trevaskis E."/>
            <person name="Vaughan K."/>
            <person name="Vignati D."/>
            <person name="Wilcox L."/>
            <person name="Wohldman P."/>
            <person name="Waterston R."/>
            <person name="Wilson R."/>
            <person name="Vaudin M."/>
        </authorList>
    </citation>
    <scope>NUCLEOTIDE SEQUENCE [LARGE SCALE GENOMIC DNA]</scope>
    <source>
        <strain>ATCC 204508 / S288c</strain>
    </source>
</reference>
<reference key="4">
    <citation type="journal article" date="2014" name="G3 (Bethesda)">
        <title>The reference genome sequence of Saccharomyces cerevisiae: Then and now.</title>
        <authorList>
            <person name="Engel S.R."/>
            <person name="Dietrich F.S."/>
            <person name="Fisk D.G."/>
            <person name="Binkley G."/>
            <person name="Balakrishnan R."/>
            <person name="Costanzo M.C."/>
            <person name="Dwight S.S."/>
            <person name="Hitz B.C."/>
            <person name="Karra K."/>
            <person name="Nash R.S."/>
            <person name="Weng S."/>
            <person name="Wong E.D."/>
            <person name="Lloyd P."/>
            <person name="Skrzypek M.S."/>
            <person name="Miyasato S.R."/>
            <person name="Simison M."/>
            <person name="Cherry J.M."/>
        </authorList>
    </citation>
    <scope>GENOME REANNOTATION</scope>
    <source>
        <strain>ATCC 204508 / S288c</strain>
    </source>
</reference>
<reference key="5">
    <citation type="journal article" date="1988" name="Mol. Cell. Biol.">
        <title>Cloning of the RNA8 gene of Saccharomyces cerevisiae, detection of the RNA8 protein, and demonstration that it is essential for nuclear pre-mRNA splicing.</title>
        <authorList>
            <person name="Jackson S.P."/>
            <person name="Lossky M."/>
            <person name="Beggs J.D."/>
        </authorList>
    </citation>
    <scope>FUNCTION</scope>
    <scope>SUBCELLULAR LOCATION</scope>
</reference>
<reference key="6">
    <citation type="journal article" date="1997" name="Cell">
        <title>Cross-intron bridging interactions in the yeast commitment complex are conserved in mammals.</title>
        <authorList>
            <person name="Abovich N."/>
            <person name="Rosbash M."/>
        </authorList>
    </citation>
    <scope>FUNCTION</scope>
    <scope>INTERACTION WITH PRP40</scope>
</reference>
<reference key="7">
    <citation type="journal article" date="1999" name="EMBO J.">
        <title>Identification by mass spectrometry and functional analysis of novel proteins of the yeast [U4/U6.U5] tri-snRNP.</title>
        <authorList>
            <person name="Gottschalk A."/>
            <person name="Neubauer G."/>
            <person name="Banroques J."/>
            <person name="Mann M."/>
            <person name="Luehrmann R."/>
            <person name="Fabrizio P."/>
        </authorList>
    </citation>
    <scope>SUBUNIT</scope>
    <scope>IDENTIFICATION IN THE U4/U5/U6 TRI-SNRNP COMPLEX</scope>
    <scope>IDENTIFICATION BY MASS SPECTROMETRY</scope>
</reference>
<reference key="8">
    <citation type="journal article" date="1999" name="Genes Dev.">
        <title>Functional interactions of Prp8 with both splice sites at the spliceosomal catalytic center.</title>
        <authorList>
            <person name="Siatecka M."/>
            <person name="Reyes J.L."/>
            <person name="Konarska M.M."/>
        </authorList>
    </citation>
    <scope>FUNCTION</scope>
</reference>
<reference key="9">
    <citation type="journal article" date="2001" name="J. Biol. Chem.">
        <title>New roles for the Snp1 and Exo84 proteins in yeast pre-mRNA splicing.</title>
        <authorList>
            <person name="Awasthi S."/>
            <person name="Palmer R."/>
            <person name="Castro M."/>
            <person name="Mobarak C.D."/>
            <person name="Ruby S.W."/>
        </authorList>
    </citation>
    <scope>INTERACTION WITH SNP1</scope>
</reference>
<reference key="10">
    <citation type="journal article" date="2002" name="Mol. Cell. Biol.">
        <title>Proteomics analysis reveals stable multiprotein complexes in both fission and budding yeasts containing Myb-related Cdc5p/Cef1p, novel pre-mRNA splicing factors, and snRNAs.</title>
        <authorList>
            <person name="Ohi M.D."/>
            <person name="Link A.J."/>
            <person name="Ren L."/>
            <person name="Jennings J.L."/>
            <person name="McDonald W.H."/>
            <person name="Gould K.L."/>
        </authorList>
    </citation>
    <scope>IDENTIFICATION IN THE CWC COMPLEX</scope>
    <scope>IDENTIFICATION BY MASS SPECTROMETRY</scope>
</reference>
<reference key="11">
    <citation type="journal article" date="2003" name="Mol. Cell">
        <title>Assigning function to yeast proteins by integration of technologies.</title>
        <authorList>
            <person name="Hazbun T.R."/>
            <person name="Malmstroem L."/>
            <person name="Anderson S."/>
            <person name="Graczyk B.J."/>
            <person name="Fox B."/>
            <person name="Riffle M."/>
            <person name="Sundin B.A."/>
            <person name="Aranda J.D."/>
            <person name="McDonald W.H."/>
            <person name="Chiu C.-H."/>
            <person name="Snydsman B.E."/>
            <person name="Bradley P."/>
            <person name="Muller E.G.D."/>
            <person name="Fields S."/>
            <person name="Baker D."/>
            <person name="Yates J.R. III"/>
            <person name="Davis T.N."/>
        </authorList>
    </citation>
    <scope>IDENTIFICATION BY MASS SPECTROMETRY</scope>
</reference>
<reference key="12">
    <citation type="journal article" date="2003" name="Mol. Cell. Biol.">
        <title>Spatial organization of protein-RNA interactions in the branch site-3' splice site region during pre-mRNA splicing in yeast.</title>
        <authorList>
            <person name="McPheeters D.S."/>
            <person name="Muhlenkamp P."/>
        </authorList>
    </citation>
    <scope>FUNCTION</scope>
</reference>
<reference key="13">
    <citation type="journal article" date="2003" name="Nature">
        <title>Global analysis of protein expression in yeast.</title>
        <authorList>
            <person name="Ghaemmaghami S."/>
            <person name="Huh W.-K."/>
            <person name="Bower K."/>
            <person name="Howson R.W."/>
            <person name="Belle A."/>
            <person name="Dephoure N."/>
            <person name="O'Shea E.K."/>
            <person name="Weissman J.S."/>
        </authorList>
    </citation>
    <scope>LEVEL OF PROTEIN EXPRESSION [LARGE SCALE ANALYSIS]</scope>
</reference>
<reference key="14">
    <citation type="journal article" date="2007" name="Nat. Struct. Mol. Biol.">
        <title>prp8 mutations that cause human retinitis pigmentosa lead to a U5 snRNP maturation defect in yeast.</title>
        <authorList>
            <person name="Boon K.L."/>
            <person name="Grainger R.J."/>
            <person name="Ehsani P."/>
            <person name="Barrass J.D."/>
            <person name="Auchynnikava T."/>
            <person name="Inglehearn C.F."/>
            <person name="Beggs J.D."/>
        </authorList>
    </citation>
    <scope>FUNCTION</scope>
    <scope>SUBUNIT</scope>
    <scope>SUBCELLULAR LOCATION</scope>
</reference>
<reference key="15">
    <citation type="journal article" date="2008" name="Nat. Struct. Mol. Biol.">
        <title>Structural elucidation of a PRP8 core domain from the heart of the spliceosome.</title>
        <authorList>
            <person name="Ritchie D.B."/>
            <person name="Schellenberg M.J."/>
            <person name="Gesner E.M."/>
            <person name="Raithatha S.A."/>
            <person name="Stuart D.T."/>
            <person name="Macmillan A.M."/>
        </authorList>
    </citation>
    <scope>MUTAGENESIS OF ASP-1853 AND ASP-1854</scope>
    <scope>LACK OF METAL-BINDING SITE</scope>
</reference>
<reference key="16">
    <citation type="journal article" date="2008" name="Nat. Struct. Mol. Biol.">
        <title>Localization of Prp8, Brr2, Snu114 and U4/U6 proteins in the yeast tri-snRNP by electron microscopy.</title>
        <authorList>
            <person name="Hacker I."/>
            <person name="Sander B."/>
            <person name="Golas M.M."/>
            <person name="Wolf E."/>
            <person name="Karagoz E."/>
            <person name="Kastner B."/>
            <person name="Stark H."/>
            <person name="Fabrizio P."/>
            <person name="Luhrmann R."/>
        </authorList>
    </citation>
    <scope>SUBUNIT</scope>
    <scope>IDENTIFICATION IN THE U4/U5/U6 TRI-SNRNP COMPLEX</scope>
    <scope>ELECTRON MICROSCOPY</scope>
</reference>
<reference key="17">
    <citation type="journal article" date="2009" name="Nat. Struct. Mol. Biol.">
        <title>ATP-dependent unwinding of U4/U6 snRNAs by the Brr2 helicase requires the C terminus of Prp8.</title>
        <authorList>
            <person name="Maeder C."/>
            <person name="Kutach A.K."/>
            <person name="Guthrie C."/>
        </authorList>
    </citation>
    <scope>FUNCTION</scope>
    <scope>INTERACTION WITH BRR2</scope>
</reference>
<reference key="18">
    <citation type="journal article" date="2009" name="RNA">
        <title>Physical and genetic interactions of yeast Cwc21p, an ortholog of human SRm300/SRRM2, suggest a role at the catalytic center of the spliceosome.</title>
        <authorList>
            <person name="Grainger R.J."/>
            <person name="Barrass J.D."/>
            <person name="Jacquier A."/>
            <person name="Rain J.-C."/>
            <person name="Beggs J.D."/>
        </authorList>
    </citation>
    <scope>INTERACTION WITH CWC21 AND SNU114</scope>
</reference>
<reference key="19">
    <citation type="journal article" date="2007" name="Mol. Cell">
        <title>Structure of a multipartite protein-protein interaction domain in splicing factor Prp8 and its link to retinitis pigmentosa.</title>
        <authorList>
            <person name="Pena V."/>
            <person name="Liu S."/>
            <person name="Bujnicki J.M."/>
            <person name="Luehrmann R."/>
            <person name="Wahl M.C."/>
        </authorList>
    </citation>
    <scope>X-RAY CRYSTALLOGRAPHY (2.0 ANGSTROMS) OF 2147-2413</scope>
    <scope>LACK OF METAL BINDING</scope>
</reference>
<reference key="20">
    <citation type="journal article" date="2008" name="EMBO J.">
        <title>Structure and function of an RNase H domain at the heart of the spliceosome.</title>
        <authorList>
            <person name="Pena V."/>
            <person name="Rozov A."/>
            <person name="Fabrizio P."/>
            <person name="Luehrmann R."/>
            <person name="Wahl M.C."/>
        </authorList>
    </citation>
    <scope>X-RAY CRYSTALLOGRAPHY (2.0 ANGSTROMS) OF 1827-2092</scope>
    <scope>LACK OF METAL BINDING</scope>
    <scope>DOMAIN</scope>
    <scope>MUTAGENESIS OF ASP-1853; ASP-1854; THR-1855; THR-1936 AND ARG-1937</scope>
</reference>
<reference key="21">
    <citation type="journal article" date="2008" name="Proc. Natl. Acad. Sci. U.S.A.">
        <title>Crystal structure of the beta-finger domain of Prp8 reveals analogy to ribosomal proteins.</title>
        <authorList>
            <person name="Yang K."/>
            <person name="Zhang L."/>
            <person name="Xu T."/>
            <person name="Heroux A."/>
            <person name="Zhao R."/>
        </authorList>
    </citation>
    <scope>X-RAY CRYSTALLOGRAPHY (2.05 ANGSTROMS) OF 1822-2095</scope>
    <scope>LACK OF METAL BINDING</scope>
    <scope>FUNCTION</scope>
    <scope>MUTAGENESIS OF ASP-1853</scope>
</reference>
<reference key="22">
    <citation type="journal article" date="2011" name="Genes Dev.">
        <title>Mechanism for Aar2p function as a U5 snRNP assembly factor.</title>
        <authorList>
            <person name="Weber G."/>
            <person name="Cristao V.F."/>
            <person name="de Lima Alves F."/>
            <person name="Santos K.F."/>
            <person name="Holton N."/>
            <person name="Rappsilber J."/>
            <person name="Beggs J.D."/>
            <person name="Wahl M.C."/>
        </authorList>
    </citation>
    <scope>X-RAY CRYSTALLOGRAPHY (1.8 ANGSTROMS) OF 1836-2092 IN COMPLEX WITH AAR2</scope>
    <scope>INTERACTION WITH AAR2</scope>
</reference>
<reference key="23">
    <citation type="journal article" date="2013" name="Nature">
        <title>Crystal structure of Prp8 reveals active site cavity of the spliceosome.</title>
        <authorList>
            <person name="Galej W.P."/>
            <person name="Oubridge C."/>
            <person name="Newman A.J."/>
            <person name="Nagai K."/>
        </authorList>
    </citation>
    <scope>X-RAY CRYSTALLOGRAPHY (2.0 ANGSTROMS) OF 885-2413 IN COMPLEX WITH AAR2</scope>
    <scope>FUNCTION</scope>
    <scope>DOMAIN</scope>
    <scope>INTERACTION WITH AAR2</scope>
    <scope>MUTAGENESIS OF HIS-1658; GLU-1684; HIS-1687; ASP-1700 AND ASP-1735</scope>
</reference>
<proteinExistence type="evidence at protein level"/>
<organism>
    <name type="scientific">Saccharomyces cerevisiae (strain ATCC 204508 / S288c)</name>
    <name type="common">Baker's yeast</name>
    <dbReference type="NCBI Taxonomy" id="559292"/>
    <lineage>
        <taxon>Eukaryota</taxon>
        <taxon>Fungi</taxon>
        <taxon>Dikarya</taxon>
        <taxon>Ascomycota</taxon>
        <taxon>Saccharomycotina</taxon>
        <taxon>Saccharomycetes</taxon>
        <taxon>Saccharomycetales</taxon>
        <taxon>Saccharomycetaceae</taxon>
        <taxon>Saccharomyces</taxon>
    </lineage>
</organism>
<keyword id="KW-0002">3D-structure</keyword>
<keyword id="KW-0507">mRNA processing</keyword>
<keyword id="KW-0508">mRNA splicing</keyword>
<keyword id="KW-0539">Nucleus</keyword>
<keyword id="KW-1185">Reference proteome</keyword>
<keyword id="KW-0687">Ribonucleoprotein</keyword>
<keyword id="KW-0694">RNA-binding</keyword>
<keyword id="KW-0747">Spliceosome</keyword>
<name>PRP8_YEAST</name>
<accession>P33334</accession>
<accession>D3DLB4</accession>
<protein>
    <recommendedName>
        <fullName>Pre-mRNA-splicing factor 8</fullName>
    </recommendedName>
</protein>
<sequence length="2413" mass="279504">MSGLPPPPPGFEEDSDLALPPPPPPPPGYEIEELDNPMVPSSVNEDTFLPPPPPPPSNFEINAEEIVDFTLPPPPPPPGLDELETKAEKKVELHGKRKLDIGKDTFVTRKSRKRAKKMTKKAKRSNLYTPKAEMPPEHLRKIINTHSDMASKMYNTDKKAFLGALKYLPHAILKLLENMPHPWEQAKEVKVLYHTSGAITFVNETPRVIEPVYTAQWSATWIAMRREKRDRTHFKRMRFPPFDDDEPPLSYEQHIENIEPLDPINLPLDSQDDEYVKDWLYDSRPLEEDSKKVNGTSYKKWSFDLPEMSNLYRLSTPLRDEVTDKNYYYLFDKKSFFNGKALNNAIPGGPKFEPLYPREEEEDYNEFNSIDRVIFRVPIRSEYKVAFPHLYNSRPRSVRIPWYNNPVSCIIQNDEEYDTPALFFDPSLNPIPHFIDNNSSLNVSNTKENGDFTLPEDFAPLLAEEEELILPNTKDAMSLYHSPFPFNRTKGKMVRAQDVALAKKWFLQHPDEEYPVKVKVSYQKLLKNYVLNELHPTLPTNHNKTKLLKSLKNTKYFQQTTIDWVEAGLQLCRQGHNMLNLLIHRKGLTYLHLDYNFNLKPTKTLTTKERKKSRLGNSFHLMRELLKMMKLIVDTHVQFRLGNVDAFQLADGIHYILNHIGQLTGIYRYKYKVMHQIRACKDLKHIIYYKFNKNLGKGPGCGFWQPAWRVWLNFLRGTIPLLERYIGNLITRQFEGRSNEIVKTTTKQRLDAYYDLELRNSVMDDILEMMPESIRQKKARTILQHLSEAWRCWKANIPWDVPGMPAPIKKIIERYIKSKADAWVSAAHYNRERIKRGAHVEKTMVKKNLGRLTRLWIKNEQERQRQIQKNGPEITPEEATTIFSVMVEWLESRSFSPIPFPPLTYKNDTKILVLALEDLKDVYASKVRLNASEREELALIEEAYDNPHDTLNRIKKYLLTQRVFKPVDITMMENYQNISPVYSVDPLEKITDAYLDQYLWYEADQRKLFPNWIKPSDSEIPPLLVYKWTQGINNLSEIWDVSRGQSAVLLETTLGEMAEKIDFTLLNRLLRLIVDPNIADYITAKNNVVINFKDMSHVNKYGLIRGLKFASFIFQYYGLVIDLLLLGQERATDLAGPANNPNEFMQFKSKEVEKAHPIRLYTRYLDRIYMLFHFEEDEGEELTDEYLAENPDPNFENSIGYNNRKCWPKDSRMRLIRQDVNLGRAVFWEIQSRVPTSLTSIKWENAFVSVYSKNNPNLLFSMCGFEVRILPRQRMEEVVSNDEGVWDLVDERTKQRTAKAYLKVSEEEIKKFDSRIRGILMASGSTTFTKVAAKWNTSLISLFTYFREAIVATEPLLDILVKGETRIQNRVKLGLNSKMPTRFPPAVFYTPKELGGLGMISASHILIPASDLSWSKQTDTGITHFRAGMTHEDEKLIPTIFRYITTWENEFLDSQRVWAEYATKRQEAIQQNRRLAFEELEGSWDRGIPRISTLFQRDRHTLAYDRGHRIRREFKQYSLERNSPFWWTNSHHDGKLWNLNAYRTDVIQALGGIETILEHTLFKGTGFNSWEGLFWEKASGFEDSMQFKKLTHAQRTGLSQIPNRRFTLWWSPTINRANVYVGFLVQLDLTGIFLHGKIPTLKISLIQIFRAHLWQKIHESIVFDICQILDGELDVLQIESVTKETVHPRKSYKMNSSAADITMESVHEWEVSKPSLLHETNDSFKGLITNKMWFDVQLRYGDYDSHDISRYVRAKFLDYTTDNVSMYPSPTGVMIGIDLAYNMYDAYGNWFNGLKPLIQNSMRTIMKANPALYVLRERIRKGLQIYQSSVQEPFLNSSNYAELFNNDIKLFVDDTNVYRVTVHKTFEGNVATKAINGCIFTLNPKTGHLFLKIIHTSVWAGQKRLSQLAKWKTAEEVSALVRSLPKEEQPKQIIVTRKAMLDPLEVHMLDFPNIAIRPTELRLPFSAAMSIDKLSDVVMKATEPQMVLFNIYDDWLDRISSYTAFSRLTLLLRALKTNEESAKMILLSDPTITIKSYHLWPSFTDEQWITIESQMRDLILTEYGRKYNVNISALTQTEIKDIILGQNIKAPSVKRQKMAELEAARSEKQNDEEAAGASTVMKTKTINAQGEEIVVVASADYESQTFSSKNEWRKSAIANTLLYLRLKNIYVSADDFVEEQNVYVLPKNLLKKFIEISDVKIQVAAFIYGMSAKDHPKVKEIKTVVLVPQLGHVGSVQISNIPDIGDLPDTEGLELLGWIHTQTEELKFMAASEVATHSKLFADKKRDCIDISIFSTPGSVSLSAYNLTDEGYQWGEENKDIMNVLSEGFEPTFSTHAQLLLSDRITGNFIIPSGNVWNYTFMGTAFNQEGDYNFKYGIPLEFYNEMHRPVHFLQFSELAGDEELEAEQIDVFS</sequence>
<evidence type="ECO:0000255" key="1">
    <source>
        <dbReference type="PROSITE-ProRule" id="PRU01182"/>
    </source>
</evidence>
<evidence type="ECO:0000256" key="2">
    <source>
        <dbReference type="SAM" id="MobiDB-lite"/>
    </source>
</evidence>
<evidence type="ECO:0000269" key="3">
    <source>
    </source>
</evidence>
<evidence type="ECO:0000269" key="4">
    <source>
    </source>
</evidence>
<evidence type="ECO:0000269" key="5">
    <source>
    </source>
</evidence>
<evidence type="ECO:0000269" key="6">
    <source>
    </source>
</evidence>
<evidence type="ECO:0000269" key="7">
    <source>
    </source>
</evidence>
<evidence type="ECO:0000269" key="8">
    <source>
    </source>
</evidence>
<evidence type="ECO:0000269" key="9">
    <source>
    </source>
</evidence>
<evidence type="ECO:0000269" key="10">
    <source>
    </source>
</evidence>
<evidence type="ECO:0000269" key="11">
    <source>
    </source>
</evidence>
<evidence type="ECO:0000269" key="12">
    <source>
    </source>
</evidence>
<evidence type="ECO:0000269" key="13">
    <source>
    </source>
</evidence>
<evidence type="ECO:0000269" key="14">
    <source>
    </source>
</evidence>
<evidence type="ECO:0000269" key="15">
    <source>
    </source>
</evidence>
<evidence type="ECO:0000269" key="16">
    <source>
    </source>
</evidence>
<evidence type="ECO:0000269" key="17">
    <source>
    </source>
</evidence>
<evidence type="ECO:0000269" key="18">
    <source>
    </source>
</evidence>
<evidence type="ECO:0000269" key="19">
    <source>
    </source>
</evidence>
<evidence type="ECO:0000305" key="20"/>
<evidence type="ECO:0007829" key="21">
    <source>
        <dbReference type="PDB" id="2OG4"/>
    </source>
</evidence>
<evidence type="ECO:0007829" key="22">
    <source>
        <dbReference type="PDB" id="3SBG"/>
    </source>
</evidence>
<evidence type="ECO:0007829" key="23">
    <source>
        <dbReference type="PDB" id="3ZEF"/>
    </source>
</evidence>
<evidence type="ECO:0007829" key="24">
    <source>
        <dbReference type="PDB" id="4BGD"/>
    </source>
</evidence>
<evidence type="ECO:0007829" key="25">
    <source>
        <dbReference type="PDB" id="4I43"/>
    </source>
</evidence>
<evidence type="ECO:0007829" key="26">
    <source>
        <dbReference type="PDB" id="5DCA"/>
    </source>
</evidence>
<evidence type="ECO:0007829" key="27">
    <source>
        <dbReference type="PDB" id="5GMK"/>
    </source>
</evidence>
<evidence type="ECO:0007829" key="28">
    <source>
        <dbReference type="PDB" id="5M52"/>
    </source>
</evidence>
<evidence type="ECO:0007829" key="29">
    <source>
        <dbReference type="PDB" id="5QZ6"/>
    </source>
</evidence>
<evidence type="ECO:0007829" key="30">
    <source>
        <dbReference type="PDB" id="5R0D"/>
    </source>
</evidence>
<evidence type="ECO:0007829" key="31">
    <source>
        <dbReference type="PDB" id="5STQ"/>
    </source>
</evidence>
<evidence type="ECO:0007829" key="32">
    <source>
        <dbReference type="PDB" id="5Y88"/>
    </source>
</evidence>
<evidence type="ECO:0007829" key="33">
    <source>
        <dbReference type="PDB" id="6BK8"/>
    </source>
</evidence>
<evidence type="ECO:0007829" key="34">
    <source>
        <dbReference type="PDB" id="6J6G"/>
    </source>
</evidence>
<evidence type="ECO:0007829" key="35">
    <source>
        <dbReference type="PDB" id="7FMI"/>
    </source>
</evidence>
<evidence type="ECO:0007829" key="36">
    <source>
        <dbReference type="PDB" id="7FNC"/>
    </source>
</evidence>
<evidence type="ECO:0007829" key="37">
    <source>
        <dbReference type="PDB" id="9DTR"/>
    </source>
</evidence>
<gene>
    <name type="primary">PRP8</name>
    <name type="synonym">DBF3</name>
    <name type="synonym">DNA39</name>
    <name type="synonym">RNA8</name>
    <name type="synonym">SLT21</name>
    <name type="synonym">USA2</name>
    <name type="ordered locus">YHR165C</name>
</gene>
<comment type="function">
    <text evidence="3 7 9 10 14 17 18 19">Functions as a scaffold that mediates the ordered assembly of spliceosomal proteins and snRNAs. Required for association of BRR2 with the spliceosomal U5 snRNP, and the subsequent assembly of the U4/U6-U5 tri-snRNP complex. Functions as a scaffold that positions spliceosomal U2, U5 and U6 snRNAs at splice sites on pre-mRNA substrates, so that splicing can occur. Interacts with both the 5' and the 3' splice site, as well as the branch region. Has a role in branch site-3' splice site selection. Associates with the branch site-3' splice 3'-exon region. Also has a role in cell cycle.</text>
</comment>
<comment type="subunit">
    <text evidence="4 5 6 9 13 14 15 16 17 19">Component of the U4/U6-U5 tri-snRNP complex composed of the U4, U6 and U5 snRNAs and at least PRP3, PRP4, PRP6, PRP8, PRP18, PRP31, PRP38, SNU13, SNU23, SNU66, SNU114, SPP381, SMB1, SMD1, SMD2, SMD3, SMX2, SMX3, LSM2, LSM3, LSM4, LSM5, LSM6, LSM7, LSM8, BRR2 and DIB1. Belongs to the CWC complex (or CEF1-associated complex), a spliceosome sub-complex reminiscent of a late-stage spliceosome composed of the U2, U5 and U6 snRNAs and at least BUD13, BUD31, BRR2, CDC40, CEF1, CLF1, CUS1, CWC2, CWC15, CWC21, CWC22, CWC23, CWC24, CWC25, CWC27, ECM2, HSH155, IST3, ISY1, LEA1, MSL1, NTC20, PRP8, PRP9, PRP11, PRP19, PRP21, PRP22, PRP45, PRP46, SLU7, SMB1, SMD1, SMD2, SMD3, SMX2, SMX3, SNT309, SNU114, SPP2, SYF1, SYF2, RSE1 and YJU2. Interacts with PRP40 and SNP1. Interacts (via SCwid domain) with CWC21. Interacts (via SCwid domain) with SNU114 (via N-terminus). Interacts (via RNase H homology domain and MPN domain) with BRR2; this modulates BRR2 ATPase and helicase activity. Interacts (via RNase H homology domain) with AAR2. AAR2 and BRR2 compete for PRP8 binding, and during U5 snRNP maturation BRR2 displaces the initially bound AAR2. Is associated with snRNP U5, together with SNU114 and BRR2.</text>
</comment>
<comment type="interaction">
    <interactant intactId="EBI-465">
        <id>P33334</id>
    </interactant>
    <interactant intactId="EBI-340">
        <id>P32357</id>
        <label>AAR2</label>
    </interactant>
    <organismsDiffer>false</organismsDiffer>
    <experiments>12</experiments>
</comment>
<comment type="interaction">
    <interactant intactId="EBI-465">
        <id>P33334</id>
    </interactant>
    <interactant intactId="EBI-861">
        <id>P32639</id>
        <label>BRR2</label>
    </interactant>
    <organismsDiffer>false</organismsDiffer>
    <experiments>26</experiments>
</comment>
<comment type="interaction">
    <interactant intactId="EBI-465">
        <id>P33334</id>
    </interactant>
    <interactant intactId="EBI-11670">
        <id>P36006</id>
        <label>MYO3</label>
    </interactant>
    <organismsDiffer>false</organismsDiffer>
    <experiments>4</experiments>
</comment>
<comment type="interaction">
    <interactant intactId="EBI-465">
        <id>P33334</id>
    </interactant>
    <interactant intactId="EBI-11687">
        <id>Q04439</id>
        <label>MYO5</label>
    </interactant>
    <organismsDiffer>false</organismsDiffer>
    <experiments>4</experiments>
</comment>
<comment type="interaction">
    <interactant intactId="EBI-465">
        <id>P33334</id>
    </interactant>
    <interactant intactId="EBI-724">
        <id>Q00916</id>
        <label>SNP1</label>
    </interactant>
    <organismsDiffer>false</organismsDiffer>
    <experiments>3</experiments>
</comment>
<comment type="subcellular location">
    <subcellularLocation>
        <location evidence="9 18">Nucleus</location>
    </subcellularLocation>
</comment>
<comment type="domain">
    <text>The MPN (JAB/Mov34) domain has structural similarity with deubiquitinating enzymes, but lacks the residues that would bind the catalytic metal ion.</text>
</comment>
<comment type="domain">
    <text>Contains a region with structural similarity to reverse transcriptase, presenting the classical thumb, fingers and palm architecture, but lacks enzyme activity, since the essential metal-binding residues are not conserved.</text>
</comment>
<comment type="domain">
    <text>Contains a region with structural similarity to type-2 restriction endonucleases, but the residues that would bind catalytic metal ions in endonucleases are instead involved in hydrogen bonds that stabilize a highly conserved loop.</text>
</comment>
<comment type="domain">
    <text>Contains a region with structural similarity to RNase H, but lacks RNase H activity.</text>
</comment>
<comment type="miscellaneous">
    <text evidence="8">Present with 468 molecules/cell in log phase SD medium.</text>
</comment>
<dbReference type="EMBL" id="Z24732">
    <property type="protein sequence ID" value="CAA80854.1"/>
    <property type="molecule type" value="Genomic_DNA"/>
</dbReference>
<dbReference type="EMBL" id="L29421">
    <property type="protein sequence ID" value="AAA67044.1"/>
    <property type="molecule type" value="Genomic_DNA"/>
</dbReference>
<dbReference type="EMBL" id="U00027">
    <property type="protein sequence ID" value="AAB68011.1"/>
    <property type="molecule type" value="Genomic_DNA"/>
</dbReference>
<dbReference type="EMBL" id="BK006934">
    <property type="protein sequence ID" value="DAA06858.1"/>
    <property type="molecule type" value="Genomic_DNA"/>
</dbReference>
<dbReference type="PIR" id="S34670">
    <property type="entry name" value="S34670"/>
</dbReference>
<dbReference type="RefSeq" id="NP_012035.1">
    <property type="nucleotide sequence ID" value="NM_001179296.1"/>
</dbReference>
<dbReference type="PDB" id="2OG4">
    <property type="method" value="X-ray"/>
    <property type="resolution" value="2.00 A"/>
    <property type="chains" value="A=2147-2397"/>
</dbReference>
<dbReference type="PDB" id="3E66">
    <property type="method" value="X-ray"/>
    <property type="resolution" value="2.05 A"/>
    <property type="chains" value="A/B=1822-2095"/>
</dbReference>
<dbReference type="PDB" id="3E9O">
    <property type="method" value="X-ray"/>
    <property type="resolution" value="2.00 A"/>
    <property type="chains" value="A=1836-2087"/>
</dbReference>
<dbReference type="PDB" id="3E9P">
    <property type="method" value="X-ray"/>
    <property type="resolution" value="2.10 A"/>
    <property type="chains" value="A/B=1833-2087"/>
</dbReference>
<dbReference type="PDB" id="3JCM">
    <property type="method" value="EM"/>
    <property type="resolution" value="3.80 A"/>
    <property type="chains" value="A=1-2413"/>
</dbReference>
<dbReference type="PDB" id="3SBG">
    <property type="method" value="X-ray"/>
    <property type="resolution" value="3.28 A"/>
    <property type="chains" value="A=1836-2397"/>
</dbReference>
<dbReference type="PDB" id="3SBT">
    <property type="method" value="X-ray"/>
    <property type="resolution" value="1.80 A"/>
    <property type="chains" value="A=1836-2092"/>
</dbReference>
<dbReference type="PDB" id="3ZEF">
    <property type="method" value="X-ray"/>
    <property type="resolution" value="3.10 A"/>
    <property type="chains" value="B/E=885-2413"/>
</dbReference>
<dbReference type="PDB" id="4BGD">
    <property type="method" value="X-ray"/>
    <property type="resolution" value="3.10 A"/>
    <property type="chains" value="C=2148-2395"/>
</dbReference>
<dbReference type="PDB" id="4I43">
    <property type="method" value="X-ray"/>
    <property type="resolution" value="2.00 A"/>
    <property type="chains" value="B=885-2413"/>
</dbReference>
<dbReference type="PDB" id="4ILG">
    <property type="method" value="X-ray"/>
    <property type="resolution" value="2.10 A"/>
    <property type="chains" value="B=1836-2090, C=2147-2413"/>
</dbReference>
<dbReference type="PDB" id="4ILH">
    <property type="method" value="X-ray"/>
    <property type="resolution" value="1.85 A"/>
    <property type="chains" value="A=1836-2090"/>
</dbReference>
<dbReference type="PDB" id="4ILJ">
    <property type="method" value="X-ray"/>
    <property type="resolution" value="2.00 A"/>
    <property type="chains" value="A/B=1836-2090"/>
</dbReference>
<dbReference type="PDB" id="5DCA">
    <property type="method" value="X-ray"/>
    <property type="resolution" value="2.80 A"/>
    <property type="chains" value="J=2148-2398"/>
</dbReference>
<dbReference type="PDB" id="5GAM">
    <property type="method" value="EM"/>
    <property type="resolution" value="3.70 A"/>
    <property type="chains" value="A=1-735"/>
</dbReference>
<dbReference type="PDB" id="5GAN">
    <property type="method" value="EM"/>
    <property type="resolution" value="3.60 A"/>
    <property type="chains" value="A=1-2413"/>
</dbReference>
<dbReference type="PDB" id="5GAO">
    <property type="method" value="EM"/>
    <property type="resolution" value="3.60 A"/>
    <property type="chains" value="A=2147-2413"/>
</dbReference>
<dbReference type="PDB" id="5GAP">
    <property type="method" value="EM"/>
    <property type="resolution" value="3.60 A"/>
    <property type="chains" value="A=1-2413"/>
</dbReference>
<dbReference type="PDB" id="5GM6">
    <property type="method" value="EM"/>
    <property type="resolution" value="3.50 A"/>
    <property type="chains" value="A=128-2413"/>
</dbReference>
<dbReference type="PDB" id="5GMK">
    <property type="method" value="EM"/>
    <property type="resolution" value="3.40 A"/>
    <property type="chains" value="A=1-2413"/>
</dbReference>
<dbReference type="PDB" id="5LJ3">
    <property type="method" value="EM"/>
    <property type="resolution" value="3.80 A"/>
    <property type="chains" value="A=1-2413"/>
</dbReference>
<dbReference type="PDB" id="5LJ5">
    <property type="method" value="EM"/>
    <property type="resolution" value="3.80 A"/>
    <property type="chains" value="A=1-2413"/>
</dbReference>
<dbReference type="PDB" id="5LQW">
    <property type="method" value="EM"/>
    <property type="resolution" value="5.80 A"/>
    <property type="chains" value="A=1-2413"/>
</dbReference>
<dbReference type="PDB" id="5M52">
    <property type="method" value="X-ray"/>
    <property type="resolution" value="3.40 A"/>
    <property type="chains" value="C/D=2147-2413"/>
</dbReference>
<dbReference type="PDB" id="5M5P">
    <property type="method" value="X-ray"/>
    <property type="resolution" value="4.20 A"/>
    <property type="chains" value="B/D=2147-2413"/>
</dbReference>
<dbReference type="PDB" id="5MPS">
    <property type="method" value="EM"/>
    <property type="resolution" value="3.85 A"/>
    <property type="chains" value="A=1-2413"/>
</dbReference>
<dbReference type="PDB" id="5MQ0">
    <property type="method" value="EM"/>
    <property type="resolution" value="4.17 A"/>
    <property type="chains" value="A=1-2413"/>
</dbReference>
<dbReference type="PDB" id="5NRL">
    <property type="method" value="EM"/>
    <property type="resolution" value="7.20 A"/>
    <property type="chains" value="A=1-2413"/>
</dbReference>
<dbReference type="PDB" id="5QY1">
    <property type="method" value="X-ray"/>
    <property type="resolution" value="1.72 A"/>
    <property type="chains" value="A=1836-2090"/>
</dbReference>
<dbReference type="PDB" id="5QY2">
    <property type="method" value="X-ray"/>
    <property type="resolution" value="1.36 A"/>
    <property type="chains" value="A=1836-2090"/>
</dbReference>
<dbReference type="PDB" id="5QY3">
    <property type="method" value="X-ray"/>
    <property type="resolution" value="1.58 A"/>
    <property type="chains" value="A=1836-2090"/>
</dbReference>
<dbReference type="PDB" id="5QY4">
    <property type="method" value="X-ray"/>
    <property type="resolution" value="1.57 A"/>
    <property type="chains" value="A=1836-2090"/>
</dbReference>
<dbReference type="PDB" id="5QY5">
    <property type="method" value="X-ray"/>
    <property type="resolution" value="1.51 A"/>
    <property type="chains" value="A=1836-2090"/>
</dbReference>
<dbReference type="PDB" id="5QY6">
    <property type="method" value="X-ray"/>
    <property type="resolution" value="1.51 A"/>
    <property type="chains" value="A=1836-2090"/>
</dbReference>
<dbReference type="PDB" id="5QY7">
    <property type="method" value="X-ray"/>
    <property type="resolution" value="1.67 A"/>
    <property type="chains" value="A=1836-2090"/>
</dbReference>
<dbReference type="PDB" id="5QY8">
    <property type="method" value="X-ray"/>
    <property type="resolution" value="1.59 A"/>
    <property type="chains" value="A=1836-2090"/>
</dbReference>
<dbReference type="PDB" id="5QY9">
    <property type="method" value="X-ray"/>
    <property type="resolution" value="1.40 A"/>
    <property type="chains" value="A=1836-2090"/>
</dbReference>
<dbReference type="PDB" id="5QYA">
    <property type="method" value="X-ray"/>
    <property type="resolution" value="1.55 A"/>
    <property type="chains" value="A=1836-2090"/>
</dbReference>
<dbReference type="PDB" id="5QYB">
    <property type="method" value="X-ray"/>
    <property type="resolution" value="2.10 A"/>
    <property type="chains" value="A=1836-2090"/>
</dbReference>
<dbReference type="PDB" id="5QYC">
    <property type="method" value="X-ray"/>
    <property type="resolution" value="1.70 A"/>
    <property type="chains" value="A=1836-2090"/>
</dbReference>
<dbReference type="PDB" id="5QYD">
    <property type="method" value="X-ray"/>
    <property type="resolution" value="1.67 A"/>
    <property type="chains" value="A=1836-2090"/>
</dbReference>
<dbReference type="PDB" id="5QYE">
    <property type="method" value="X-ray"/>
    <property type="resolution" value="1.51 A"/>
    <property type="chains" value="A=1836-2090"/>
</dbReference>
<dbReference type="PDB" id="5QYF">
    <property type="method" value="X-ray"/>
    <property type="resolution" value="1.49 A"/>
    <property type="chains" value="A=1836-2090"/>
</dbReference>
<dbReference type="PDB" id="5QYG">
    <property type="method" value="X-ray"/>
    <property type="resolution" value="1.67 A"/>
    <property type="chains" value="A=1836-2090"/>
</dbReference>
<dbReference type="PDB" id="5QYH">
    <property type="method" value="X-ray"/>
    <property type="resolution" value="1.47 A"/>
    <property type="chains" value="A=1836-2090"/>
</dbReference>
<dbReference type="PDB" id="5QYI">
    <property type="method" value="X-ray"/>
    <property type="resolution" value="1.58 A"/>
    <property type="chains" value="A=1836-2090"/>
</dbReference>
<dbReference type="PDB" id="5QYJ">
    <property type="method" value="X-ray"/>
    <property type="resolution" value="1.51 A"/>
    <property type="chains" value="A=1836-2090"/>
</dbReference>
<dbReference type="PDB" id="5QYK">
    <property type="method" value="X-ray"/>
    <property type="resolution" value="1.63 A"/>
    <property type="chains" value="A=1836-2090"/>
</dbReference>
<dbReference type="PDB" id="5QYL">
    <property type="method" value="X-ray"/>
    <property type="resolution" value="1.56 A"/>
    <property type="chains" value="A=1836-2090"/>
</dbReference>
<dbReference type="PDB" id="5QYM">
    <property type="method" value="X-ray"/>
    <property type="resolution" value="1.47 A"/>
    <property type="chains" value="A=1836-2090"/>
</dbReference>
<dbReference type="PDB" id="5QYN">
    <property type="method" value="X-ray"/>
    <property type="resolution" value="1.65 A"/>
    <property type="chains" value="A=1836-2090"/>
</dbReference>
<dbReference type="PDB" id="5QYO">
    <property type="method" value="X-ray"/>
    <property type="resolution" value="1.58 A"/>
    <property type="chains" value="A=1836-2090"/>
</dbReference>
<dbReference type="PDB" id="5QYP">
    <property type="method" value="X-ray"/>
    <property type="resolution" value="1.61 A"/>
    <property type="chains" value="A=1836-2090"/>
</dbReference>
<dbReference type="PDB" id="5QYQ">
    <property type="method" value="X-ray"/>
    <property type="resolution" value="1.67 A"/>
    <property type="chains" value="A=1836-2090"/>
</dbReference>
<dbReference type="PDB" id="5QYR">
    <property type="method" value="X-ray"/>
    <property type="resolution" value="1.54 A"/>
    <property type="chains" value="A=1836-2090"/>
</dbReference>
<dbReference type="PDB" id="5QYS">
    <property type="method" value="X-ray"/>
    <property type="resolution" value="1.52 A"/>
    <property type="chains" value="A=1836-2090"/>
</dbReference>
<dbReference type="PDB" id="5QYT">
    <property type="method" value="X-ray"/>
    <property type="resolution" value="1.52 A"/>
    <property type="chains" value="A=1836-2090"/>
</dbReference>
<dbReference type="PDB" id="5QYU">
    <property type="method" value="X-ray"/>
    <property type="resolution" value="1.51 A"/>
    <property type="chains" value="A=1836-2090"/>
</dbReference>
<dbReference type="PDB" id="5QYV">
    <property type="method" value="X-ray"/>
    <property type="resolution" value="1.59 A"/>
    <property type="chains" value="A=1836-2090"/>
</dbReference>
<dbReference type="PDB" id="5QYW">
    <property type="method" value="X-ray"/>
    <property type="resolution" value="1.63 A"/>
    <property type="chains" value="A=1836-2090"/>
</dbReference>
<dbReference type="PDB" id="5QYX">
    <property type="method" value="X-ray"/>
    <property type="resolution" value="1.60 A"/>
    <property type="chains" value="A=1836-2090"/>
</dbReference>
<dbReference type="PDB" id="5QYY">
    <property type="method" value="X-ray"/>
    <property type="resolution" value="1.71 A"/>
    <property type="chains" value="A=1836-2090"/>
</dbReference>
<dbReference type="PDB" id="5QYZ">
    <property type="method" value="X-ray"/>
    <property type="resolution" value="1.37 A"/>
    <property type="chains" value="A=1836-2090"/>
</dbReference>
<dbReference type="PDB" id="5QZ0">
    <property type="method" value="X-ray"/>
    <property type="resolution" value="1.57 A"/>
    <property type="chains" value="A=1836-2090"/>
</dbReference>
<dbReference type="PDB" id="5QZ1">
    <property type="method" value="X-ray"/>
    <property type="resolution" value="1.58 A"/>
    <property type="chains" value="A=1836-2090"/>
</dbReference>
<dbReference type="PDB" id="5QZ2">
    <property type="method" value="X-ray"/>
    <property type="resolution" value="1.54 A"/>
    <property type="chains" value="A=1836-2090"/>
</dbReference>
<dbReference type="PDB" id="5QZ3">
    <property type="method" value="X-ray"/>
    <property type="resolution" value="1.53 A"/>
    <property type="chains" value="A=1836-2090"/>
</dbReference>
<dbReference type="PDB" id="5QZ4">
    <property type="method" value="X-ray"/>
    <property type="resolution" value="1.75 A"/>
    <property type="chains" value="A=1836-2090"/>
</dbReference>
<dbReference type="PDB" id="5QZ5">
    <property type="method" value="X-ray"/>
    <property type="resolution" value="1.51 A"/>
    <property type="chains" value="A=1836-2090"/>
</dbReference>
<dbReference type="PDB" id="5QZ6">
    <property type="method" value="X-ray"/>
    <property type="resolution" value="1.32 A"/>
    <property type="chains" value="A=1836-2090"/>
</dbReference>
<dbReference type="PDB" id="5QZ7">
    <property type="method" value="X-ray"/>
    <property type="resolution" value="1.48 A"/>
    <property type="chains" value="A=1836-2090"/>
</dbReference>
<dbReference type="PDB" id="5QZ8">
    <property type="method" value="X-ray"/>
    <property type="resolution" value="1.62 A"/>
    <property type="chains" value="A=1836-2090"/>
</dbReference>
<dbReference type="PDB" id="5QZ9">
    <property type="method" value="X-ray"/>
    <property type="resolution" value="1.43 A"/>
    <property type="chains" value="A=1836-2090"/>
</dbReference>
<dbReference type="PDB" id="5QZA">
    <property type="method" value="X-ray"/>
    <property type="resolution" value="1.51 A"/>
    <property type="chains" value="A=1836-2090"/>
</dbReference>
<dbReference type="PDB" id="5QZB">
    <property type="method" value="X-ray"/>
    <property type="resolution" value="1.69 A"/>
    <property type="chains" value="A=1836-2090"/>
</dbReference>
<dbReference type="PDB" id="5QZC">
    <property type="method" value="X-ray"/>
    <property type="resolution" value="1.72 A"/>
    <property type="chains" value="A=1836-2090"/>
</dbReference>
<dbReference type="PDB" id="5QZD">
    <property type="method" value="X-ray"/>
    <property type="resolution" value="1.59 A"/>
    <property type="chains" value="A=1836-2090"/>
</dbReference>
<dbReference type="PDB" id="5QZE">
    <property type="method" value="X-ray"/>
    <property type="resolution" value="1.55 A"/>
    <property type="chains" value="A=1836-2090"/>
</dbReference>
<dbReference type="PDB" id="5QZF">
    <property type="method" value="X-ray"/>
    <property type="resolution" value="1.68 A"/>
    <property type="chains" value="A=1836-2090"/>
</dbReference>
<dbReference type="PDB" id="5QZG">
    <property type="method" value="X-ray"/>
    <property type="resolution" value="1.55 A"/>
    <property type="chains" value="A=1836-2090"/>
</dbReference>
<dbReference type="PDB" id="5QZH">
    <property type="method" value="X-ray"/>
    <property type="resolution" value="1.77 A"/>
    <property type="chains" value="A=1836-2090"/>
</dbReference>
<dbReference type="PDB" id="5QZI">
    <property type="method" value="X-ray"/>
    <property type="resolution" value="1.51 A"/>
    <property type="chains" value="A=1836-2090"/>
</dbReference>
<dbReference type="PDB" id="5QZJ">
    <property type="method" value="X-ray"/>
    <property type="resolution" value="1.51 A"/>
    <property type="chains" value="A=1836-2090"/>
</dbReference>
<dbReference type="PDB" id="5QZK">
    <property type="method" value="X-ray"/>
    <property type="resolution" value="1.73 A"/>
    <property type="chains" value="A=1836-2090"/>
</dbReference>
<dbReference type="PDB" id="5QZL">
    <property type="method" value="X-ray"/>
    <property type="resolution" value="1.54 A"/>
    <property type="chains" value="A=1836-2090"/>
</dbReference>
<dbReference type="PDB" id="5QZM">
    <property type="method" value="X-ray"/>
    <property type="resolution" value="1.66 A"/>
    <property type="chains" value="A=1836-2090"/>
</dbReference>
<dbReference type="PDB" id="5QZN">
    <property type="method" value="X-ray"/>
    <property type="resolution" value="1.44 A"/>
    <property type="chains" value="A=1836-2090"/>
</dbReference>
<dbReference type="PDB" id="5QZO">
    <property type="method" value="X-ray"/>
    <property type="resolution" value="1.39 A"/>
    <property type="chains" value="A=1836-2090"/>
</dbReference>
<dbReference type="PDB" id="5QZP">
    <property type="method" value="X-ray"/>
    <property type="resolution" value="1.50 A"/>
    <property type="chains" value="A=1836-2090"/>
</dbReference>
<dbReference type="PDB" id="5QZQ">
    <property type="method" value="X-ray"/>
    <property type="resolution" value="2.11 A"/>
    <property type="chains" value="A=1836-2090"/>
</dbReference>
<dbReference type="PDB" id="5QZR">
    <property type="method" value="X-ray"/>
    <property type="resolution" value="1.59 A"/>
    <property type="chains" value="A=1836-2090"/>
</dbReference>
<dbReference type="PDB" id="5QZS">
    <property type="method" value="X-ray"/>
    <property type="resolution" value="1.58 A"/>
    <property type="chains" value="A=1836-2090"/>
</dbReference>
<dbReference type="PDB" id="5QZT">
    <property type="method" value="X-ray"/>
    <property type="resolution" value="1.53 A"/>
    <property type="chains" value="A=1836-2090"/>
</dbReference>
<dbReference type="PDB" id="5QZU">
    <property type="method" value="X-ray"/>
    <property type="resolution" value="1.54 A"/>
    <property type="chains" value="A=1836-2090"/>
</dbReference>
<dbReference type="PDB" id="5QZV">
    <property type="method" value="X-ray"/>
    <property type="resolution" value="2.11 A"/>
    <property type="chains" value="A=1836-2090"/>
</dbReference>
<dbReference type="PDB" id="5QZW">
    <property type="method" value="X-ray"/>
    <property type="resolution" value="1.36 A"/>
    <property type="chains" value="A=1836-2090"/>
</dbReference>
<dbReference type="PDB" id="5QZX">
    <property type="method" value="X-ray"/>
    <property type="resolution" value="1.55 A"/>
    <property type="chains" value="A=1836-2090"/>
</dbReference>
<dbReference type="PDB" id="5QZY">
    <property type="method" value="X-ray"/>
    <property type="resolution" value="1.66 A"/>
    <property type="chains" value="A=1836-2090"/>
</dbReference>
<dbReference type="PDB" id="5QZZ">
    <property type="method" value="X-ray"/>
    <property type="resolution" value="1.59 A"/>
    <property type="chains" value="A=1836-2090"/>
</dbReference>
<dbReference type="PDB" id="5R00">
    <property type="method" value="X-ray"/>
    <property type="resolution" value="1.72 A"/>
    <property type="chains" value="A=1836-2090"/>
</dbReference>
<dbReference type="PDB" id="5R01">
    <property type="method" value="X-ray"/>
    <property type="resolution" value="1.72 A"/>
    <property type="chains" value="A=1836-2090"/>
</dbReference>
<dbReference type="PDB" id="5R02">
    <property type="method" value="X-ray"/>
    <property type="resolution" value="1.66 A"/>
    <property type="chains" value="A=1836-2090"/>
</dbReference>
<dbReference type="PDB" id="5R03">
    <property type="method" value="X-ray"/>
    <property type="resolution" value="1.51 A"/>
    <property type="chains" value="A=1836-2090"/>
</dbReference>
<dbReference type="PDB" id="5R04">
    <property type="method" value="X-ray"/>
    <property type="resolution" value="1.34 A"/>
    <property type="chains" value="A=1836-2090"/>
</dbReference>
<dbReference type="PDB" id="5R05">
    <property type="method" value="X-ray"/>
    <property type="resolution" value="1.57 A"/>
    <property type="chains" value="A=1836-2090"/>
</dbReference>
<dbReference type="PDB" id="5R06">
    <property type="method" value="X-ray"/>
    <property type="resolution" value="1.67 A"/>
    <property type="chains" value="A=1836-2090"/>
</dbReference>
<dbReference type="PDB" id="5R07">
    <property type="method" value="X-ray"/>
    <property type="resolution" value="1.71 A"/>
    <property type="chains" value="A=1836-2090"/>
</dbReference>
<dbReference type="PDB" id="5R08">
    <property type="method" value="X-ray"/>
    <property type="resolution" value="1.70 A"/>
    <property type="chains" value="A=1836-2090"/>
</dbReference>
<dbReference type="PDB" id="5R09">
    <property type="method" value="X-ray"/>
    <property type="resolution" value="1.56 A"/>
    <property type="chains" value="A=1836-2090"/>
</dbReference>
<dbReference type="PDB" id="5R0A">
    <property type="method" value="X-ray"/>
    <property type="resolution" value="1.54 A"/>
    <property type="chains" value="A=1836-2090"/>
</dbReference>
<dbReference type="PDB" id="5R0B">
    <property type="method" value="X-ray"/>
    <property type="resolution" value="1.82 A"/>
    <property type="chains" value="A=1836-2090"/>
</dbReference>
<dbReference type="PDB" id="5R0C">
    <property type="method" value="X-ray"/>
    <property type="resolution" value="1.60 A"/>
    <property type="chains" value="A=1836-2090"/>
</dbReference>
<dbReference type="PDB" id="5R0D">
    <property type="method" value="X-ray"/>
    <property type="resolution" value="1.27 A"/>
    <property type="chains" value="A=1836-2090"/>
</dbReference>
<dbReference type="PDB" id="5R0E">
    <property type="method" value="X-ray"/>
    <property type="resolution" value="1.59 A"/>
    <property type="chains" value="A=1836-2090"/>
</dbReference>
<dbReference type="PDB" id="5R0F">
    <property type="method" value="X-ray"/>
    <property type="resolution" value="1.97 A"/>
    <property type="chains" value="A=1836-2090"/>
</dbReference>
<dbReference type="PDB" id="5R0G">
    <property type="method" value="X-ray"/>
    <property type="resolution" value="1.73 A"/>
    <property type="chains" value="A=1836-2090"/>
</dbReference>
<dbReference type="PDB" id="5R0H">
    <property type="method" value="X-ray"/>
    <property type="resolution" value="1.57 A"/>
    <property type="chains" value="A=1836-2090"/>
</dbReference>
<dbReference type="PDB" id="5R0I">
    <property type="method" value="X-ray"/>
    <property type="resolution" value="1.86 A"/>
    <property type="chains" value="A=1836-2090"/>
</dbReference>
<dbReference type="PDB" id="5R0J">
    <property type="method" value="X-ray"/>
    <property type="resolution" value="1.81 A"/>
    <property type="chains" value="A=1836-2090"/>
</dbReference>
<dbReference type="PDB" id="5R0K">
    <property type="method" value="X-ray"/>
    <property type="resolution" value="1.80 A"/>
    <property type="chains" value="A=1836-2090"/>
</dbReference>
<dbReference type="PDB" id="5R0L">
    <property type="method" value="X-ray"/>
    <property type="resolution" value="1.70 A"/>
    <property type="chains" value="A=1836-2090"/>
</dbReference>
<dbReference type="PDB" id="5R0M">
    <property type="method" value="X-ray"/>
    <property type="resolution" value="1.70 A"/>
    <property type="chains" value="A=1836-2090"/>
</dbReference>
<dbReference type="PDB" id="5R0N">
    <property type="method" value="X-ray"/>
    <property type="resolution" value="1.78 A"/>
    <property type="chains" value="A=1836-2090"/>
</dbReference>
<dbReference type="PDB" id="5R0O">
    <property type="method" value="X-ray"/>
    <property type="resolution" value="1.86 A"/>
    <property type="chains" value="A=1836-2090"/>
</dbReference>
<dbReference type="PDB" id="5R0P">
    <property type="method" value="X-ray"/>
    <property type="resolution" value="1.73 A"/>
    <property type="chains" value="A=1836-2090"/>
</dbReference>
<dbReference type="PDB" id="5R0Q">
    <property type="method" value="X-ray"/>
    <property type="resolution" value="1.91 A"/>
    <property type="chains" value="A=1836-2090"/>
</dbReference>
<dbReference type="PDB" id="5R0R">
    <property type="method" value="X-ray"/>
    <property type="resolution" value="1.73 A"/>
    <property type="chains" value="A=1836-2090"/>
</dbReference>
<dbReference type="PDB" id="5R0S">
    <property type="method" value="X-ray"/>
    <property type="resolution" value="1.81 A"/>
    <property type="chains" value="A=1836-2090"/>
</dbReference>
<dbReference type="PDB" id="5R0T">
    <property type="method" value="X-ray"/>
    <property type="resolution" value="1.96 A"/>
    <property type="chains" value="A=1836-2090"/>
</dbReference>
<dbReference type="PDB" id="5R0U">
    <property type="method" value="X-ray"/>
    <property type="resolution" value="1.86 A"/>
    <property type="chains" value="A=1836-2090"/>
</dbReference>
<dbReference type="PDB" id="5R0V">
    <property type="method" value="X-ray"/>
    <property type="resolution" value="1.81 A"/>
    <property type="chains" value="A=1836-2090"/>
</dbReference>
<dbReference type="PDB" id="5R0W">
    <property type="method" value="X-ray"/>
    <property type="resolution" value="1.86 A"/>
    <property type="chains" value="A=1836-2090"/>
</dbReference>
<dbReference type="PDB" id="5R0X">
    <property type="method" value="X-ray"/>
    <property type="resolution" value="1.84 A"/>
    <property type="chains" value="A=1836-2090"/>
</dbReference>
<dbReference type="PDB" id="5R0Y">
    <property type="method" value="X-ray"/>
    <property type="resolution" value="1.75 A"/>
    <property type="chains" value="A=1836-2090"/>
</dbReference>
<dbReference type="PDB" id="5R0Z">
    <property type="method" value="X-ray"/>
    <property type="resolution" value="1.86 A"/>
    <property type="chains" value="A=1836-2090"/>
</dbReference>
<dbReference type="PDB" id="5R10">
    <property type="method" value="X-ray"/>
    <property type="resolution" value="1.70 A"/>
    <property type="chains" value="A=1836-2090"/>
</dbReference>
<dbReference type="PDB" id="5R11">
    <property type="method" value="X-ray"/>
    <property type="resolution" value="1.82 A"/>
    <property type="chains" value="A=1836-2090"/>
</dbReference>
<dbReference type="PDB" id="5R12">
    <property type="method" value="X-ray"/>
    <property type="resolution" value="1.70 A"/>
    <property type="chains" value="A=1836-2090"/>
</dbReference>
<dbReference type="PDB" id="5R13">
    <property type="method" value="X-ray"/>
    <property type="resolution" value="1.87 A"/>
    <property type="chains" value="A=1836-2090"/>
</dbReference>
<dbReference type="PDB" id="5R14">
    <property type="method" value="X-ray"/>
    <property type="resolution" value="1.74 A"/>
    <property type="chains" value="A=1836-2090"/>
</dbReference>
<dbReference type="PDB" id="5R15">
    <property type="method" value="X-ray"/>
    <property type="resolution" value="1.79 A"/>
    <property type="chains" value="A=1836-2090"/>
</dbReference>
<dbReference type="PDB" id="5R16">
    <property type="method" value="X-ray"/>
    <property type="resolution" value="1.84 A"/>
    <property type="chains" value="A=1836-2090"/>
</dbReference>
<dbReference type="PDB" id="5R17">
    <property type="method" value="X-ray"/>
    <property type="resolution" value="1.87 A"/>
    <property type="chains" value="A=1836-2090"/>
</dbReference>
<dbReference type="PDB" id="5R18">
    <property type="method" value="X-ray"/>
    <property type="resolution" value="1.79 A"/>
    <property type="chains" value="A=1836-2090"/>
</dbReference>
<dbReference type="PDB" id="5R19">
    <property type="method" value="X-ray"/>
    <property type="resolution" value="1.70 A"/>
    <property type="chains" value="A=1836-2090"/>
</dbReference>
<dbReference type="PDB" id="5R1A">
    <property type="method" value="X-ray"/>
    <property type="resolution" value="1.73 A"/>
    <property type="chains" value="A=1836-2090"/>
</dbReference>
<dbReference type="PDB" id="5R1B">
    <property type="method" value="X-ray"/>
    <property type="resolution" value="1.89 A"/>
    <property type="chains" value="A=1836-2090"/>
</dbReference>
<dbReference type="PDB" id="5R1C">
    <property type="method" value="X-ray"/>
    <property type="resolution" value="1.91 A"/>
    <property type="chains" value="A=1836-2090"/>
</dbReference>
<dbReference type="PDB" id="5R1D">
    <property type="method" value="X-ray"/>
    <property type="resolution" value="1.82 A"/>
    <property type="chains" value="A=1836-2090"/>
</dbReference>
<dbReference type="PDB" id="5R1E">
    <property type="method" value="X-ray"/>
    <property type="resolution" value="1.70 A"/>
    <property type="chains" value="A=1836-2090"/>
</dbReference>
<dbReference type="PDB" id="5R1F">
    <property type="method" value="X-ray"/>
    <property type="resolution" value="1.80 A"/>
    <property type="chains" value="A=1836-2090"/>
</dbReference>
<dbReference type="PDB" id="5R1G">
    <property type="method" value="X-ray"/>
    <property type="resolution" value="1.81 A"/>
    <property type="chains" value="A=1836-2090"/>
</dbReference>
<dbReference type="PDB" id="5R1H">
    <property type="method" value="X-ray"/>
    <property type="resolution" value="2.06 A"/>
    <property type="chains" value="A=1836-2090"/>
</dbReference>
<dbReference type="PDB" id="5R1I">
    <property type="method" value="X-ray"/>
    <property type="resolution" value="2.01 A"/>
    <property type="chains" value="A=1836-2090"/>
</dbReference>
<dbReference type="PDB" id="5R1J">
    <property type="method" value="X-ray"/>
    <property type="resolution" value="1.96 A"/>
    <property type="chains" value="A=1836-2090"/>
</dbReference>
<dbReference type="PDB" id="5R1K">
    <property type="method" value="X-ray"/>
    <property type="resolution" value="1.99 A"/>
    <property type="chains" value="A=1836-2090"/>
</dbReference>
<dbReference type="PDB" id="5R1L">
    <property type="method" value="X-ray"/>
    <property type="resolution" value="1.94 A"/>
    <property type="chains" value="A=1836-2090"/>
</dbReference>
<dbReference type="PDB" id="5R1M">
    <property type="method" value="X-ray"/>
    <property type="resolution" value="1.90 A"/>
    <property type="chains" value="A=1836-2090"/>
</dbReference>
<dbReference type="PDB" id="5R1N">
    <property type="method" value="X-ray"/>
    <property type="resolution" value="1.94 A"/>
    <property type="chains" value="A=1836-2090"/>
</dbReference>
<dbReference type="PDB" id="5R1O">
    <property type="method" value="X-ray"/>
    <property type="resolution" value="1.90 A"/>
    <property type="chains" value="A=1836-2090"/>
</dbReference>
<dbReference type="PDB" id="5R1P">
    <property type="method" value="X-ray"/>
    <property type="resolution" value="1.95 A"/>
    <property type="chains" value="A=1836-2090"/>
</dbReference>
<dbReference type="PDB" id="5R1Q">
    <property type="method" value="X-ray"/>
    <property type="resolution" value="1.86 A"/>
    <property type="chains" value="A=1836-2090"/>
</dbReference>
<dbReference type="PDB" id="5R1S">
    <property type="method" value="X-ray"/>
    <property type="resolution" value="2.05 A"/>
    <property type="chains" value="A=1836-2090"/>
</dbReference>
<dbReference type="PDB" id="5ST0">
    <property type="method" value="X-ray"/>
    <property type="resolution" value="1.54 A"/>
    <property type="chains" value="A=1836-2090"/>
</dbReference>
<dbReference type="PDB" id="5ST1">
    <property type="method" value="X-ray"/>
    <property type="resolution" value="1.58 A"/>
    <property type="chains" value="A=1836-2090"/>
</dbReference>
<dbReference type="PDB" id="5ST2">
    <property type="method" value="X-ray"/>
    <property type="resolution" value="1.53 A"/>
    <property type="chains" value="A=1836-2090"/>
</dbReference>
<dbReference type="PDB" id="5ST3">
    <property type="method" value="X-ray"/>
    <property type="resolution" value="1.47 A"/>
    <property type="chains" value="A=1836-2090"/>
</dbReference>
<dbReference type="PDB" id="5ST4">
    <property type="method" value="X-ray"/>
    <property type="resolution" value="1.44 A"/>
    <property type="chains" value="A=1836-2090"/>
</dbReference>
<dbReference type="PDB" id="5ST5">
    <property type="method" value="X-ray"/>
    <property type="resolution" value="1.61 A"/>
    <property type="chains" value="A=1836-2090"/>
</dbReference>
<dbReference type="PDB" id="5ST6">
    <property type="method" value="X-ray"/>
    <property type="resolution" value="1.62 A"/>
    <property type="chains" value="A=1836-2090"/>
</dbReference>
<dbReference type="PDB" id="5ST7">
    <property type="method" value="X-ray"/>
    <property type="resolution" value="1.46 A"/>
    <property type="chains" value="A=1836-2090"/>
</dbReference>
<dbReference type="PDB" id="5ST8">
    <property type="method" value="X-ray"/>
    <property type="resolution" value="1.51 A"/>
    <property type="chains" value="A=1836-2090"/>
</dbReference>
<dbReference type="PDB" id="5ST9">
    <property type="method" value="X-ray"/>
    <property type="resolution" value="1.40 A"/>
    <property type="chains" value="A=1836-2090"/>
</dbReference>
<dbReference type="PDB" id="5STA">
    <property type="method" value="X-ray"/>
    <property type="resolution" value="1.58 A"/>
    <property type="chains" value="A=1836-2090"/>
</dbReference>
<dbReference type="PDB" id="5STB">
    <property type="method" value="X-ray"/>
    <property type="resolution" value="1.55 A"/>
    <property type="chains" value="A=1836-2090"/>
</dbReference>
<dbReference type="PDB" id="5STC">
    <property type="method" value="X-ray"/>
    <property type="resolution" value="1.44 A"/>
    <property type="chains" value="A=1836-2090"/>
</dbReference>
<dbReference type="PDB" id="5STE">
    <property type="method" value="X-ray"/>
    <property type="resolution" value="1.51 A"/>
    <property type="chains" value="A=1836-2090"/>
</dbReference>
<dbReference type="PDB" id="5STF">
    <property type="method" value="X-ray"/>
    <property type="resolution" value="1.45 A"/>
    <property type="chains" value="A=1836-2090"/>
</dbReference>
<dbReference type="PDB" id="5STG">
    <property type="method" value="X-ray"/>
    <property type="resolution" value="1.61 A"/>
    <property type="chains" value="A=1836-2090"/>
</dbReference>
<dbReference type="PDB" id="5STH">
    <property type="method" value="X-ray"/>
    <property type="resolution" value="1.67 A"/>
    <property type="chains" value="A=1836-2090"/>
</dbReference>
<dbReference type="PDB" id="5STI">
    <property type="method" value="X-ray"/>
    <property type="resolution" value="1.76 A"/>
    <property type="chains" value="A=1836-2090"/>
</dbReference>
<dbReference type="PDB" id="5STJ">
    <property type="method" value="X-ray"/>
    <property type="resolution" value="1.76 A"/>
    <property type="chains" value="A=1836-2090"/>
</dbReference>
<dbReference type="PDB" id="5STK">
    <property type="method" value="X-ray"/>
    <property type="resolution" value="1.80 A"/>
    <property type="chains" value="A=1836-2090"/>
</dbReference>
<dbReference type="PDB" id="5STL">
    <property type="method" value="X-ray"/>
    <property type="resolution" value="1.51 A"/>
    <property type="chains" value="A=1836-2090"/>
</dbReference>
<dbReference type="PDB" id="5STM">
    <property type="method" value="X-ray"/>
    <property type="resolution" value="1.65 A"/>
    <property type="chains" value="A=1836-2090"/>
</dbReference>
<dbReference type="PDB" id="5STN">
    <property type="method" value="X-ray"/>
    <property type="resolution" value="1.56 A"/>
    <property type="chains" value="A=1836-2090"/>
</dbReference>
<dbReference type="PDB" id="5STO">
    <property type="method" value="X-ray"/>
    <property type="resolution" value="1.55 A"/>
    <property type="chains" value="A=1836-2090"/>
</dbReference>
<dbReference type="PDB" id="5STP">
    <property type="method" value="X-ray"/>
    <property type="resolution" value="1.51 A"/>
    <property type="chains" value="A=1836-2090"/>
</dbReference>
<dbReference type="PDB" id="5STQ">
    <property type="method" value="X-ray"/>
    <property type="resolution" value="1.50 A"/>
    <property type="chains" value="A=1836-2090"/>
</dbReference>
<dbReference type="PDB" id="5STR">
    <property type="method" value="X-ray"/>
    <property type="resolution" value="1.45 A"/>
    <property type="chains" value="A=1836-2090"/>
</dbReference>
<dbReference type="PDB" id="5STS">
    <property type="method" value="X-ray"/>
    <property type="resolution" value="1.57 A"/>
    <property type="chains" value="A=1836-2090"/>
</dbReference>
<dbReference type="PDB" id="5STT">
    <property type="method" value="X-ray"/>
    <property type="resolution" value="1.49 A"/>
    <property type="chains" value="A=1836-2090"/>
</dbReference>
<dbReference type="PDB" id="5STU">
    <property type="method" value="X-ray"/>
    <property type="resolution" value="1.55 A"/>
    <property type="chains" value="A=1836-2090"/>
</dbReference>
<dbReference type="PDB" id="5STV">
    <property type="method" value="X-ray"/>
    <property type="resolution" value="1.50 A"/>
    <property type="chains" value="A=1836-2090"/>
</dbReference>
<dbReference type="PDB" id="5STW">
    <property type="method" value="X-ray"/>
    <property type="resolution" value="1.89 A"/>
    <property type="chains" value="A=1836-2090"/>
</dbReference>
<dbReference type="PDB" id="5STX">
    <property type="method" value="X-ray"/>
    <property type="resolution" value="1.50 A"/>
    <property type="chains" value="A=1836-2090"/>
</dbReference>
<dbReference type="PDB" id="5STY">
    <property type="method" value="X-ray"/>
    <property type="resolution" value="1.57 A"/>
    <property type="chains" value="A=1836-2090"/>
</dbReference>
<dbReference type="PDB" id="5STZ">
    <property type="method" value="X-ray"/>
    <property type="resolution" value="1.44 A"/>
    <property type="chains" value="A=1836-2090"/>
</dbReference>
<dbReference type="PDB" id="5SU0">
    <property type="method" value="X-ray"/>
    <property type="resolution" value="1.54 A"/>
    <property type="chains" value="A=1836-2090"/>
</dbReference>
<dbReference type="PDB" id="5SU1">
    <property type="method" value="X-ray"/>
    <property type="resolution" value="1.57 A"/>
    <property type="chains" value="A=1836-2090"/>
</dbReference>
<dbReference type="PDB" id="5SU2">
    <property type="method" value="X-ray"/>
    <property type="resolution" value="1.85 A"/>
    <property type="chains" value="A=1836-2090"/>
</dbReference>
<dbReference type="PDB" id="5SU3">
    <property type="method" value="X-ray"/>
    <property type="resolution" value="1.65 A"/>
    <property type="chains" value="A=1836-2090"/>
</dbReference>
<dbReference type="PDB" id="5SU4">
    <property type="method" value="X-ray"/>
    <property type="resolution" value="1.66 A"/>
    <property type="chains" value="A=1836-2090"/>
</dbReference>
<dbReference type="PDB" id="5SU5">
    <property type="method" value="X-ray"/>
    <property type="resolution" value="1.81 A"/>
    <property type="chains" value="A=1836-2090"/>
</dbReference>
<dbReference type="PDB" id="5SU6">
    <property type="method" value="X-ray"/>
    <property type="resolution" value="1.51 A"/>
    <property type="chains" value="A=1836-2090"/>
</dbReference>
<dbReference type="PDB" id="5SU7">
    <property type="method" value="X-ray"/>
    <property type="resolution" value="1.81 A"/>
    <property type="chains" value="A=1836-2090"/>
</dbReference>
<dbReference type="PDB" id="5SU8">
    <property type="method" value="X-ray"/>
    <property type="resolution" value="1.79 A"/>
    <property type="chains" value="A=1836-2090"/>
</dbReference>
<dbReference type="PDB" id="5SU9">
    <property type="method" value="X-ray"/>
    <property type="resolution" value="1.66 A"/>
    <property type="chains" value="A=1836-2090"/>
</dbReference>
<dbReference type="PDB" id="5SUA">
    <property type="method" value="X-ray"/>
    <property type="resolution" value="1.53 A"/>
    <property type="chains" value="A=1836-2090"/>
</dbReference>
<dbReference type="PDB" id="5SUB">
    <property type="method" value="X-ray"/>
    <property type="resolution" value="1.51 A"/>
    <property type="chains" value="A=1836-2090"/>
</dbReference>
<dbReference type="PDB" id="5SUC">
    <property type="method" value="X-ray"/>
    <property type="resolution" value="1.54 A"/>
    <property type="chains" value="A=1836-2090"/>
</dbReference>
<dbReference type="PDB" id="5SUD">
    <property type="method" value="X-ray"/>
    <property type="resolution" value="1.48 A"/>
    <property type="chains" value="A=1836-2090"/>
</dbReference>
<dbReference type="PDB" id="5SUE">
    <property type="method" value="X-ray"/>
    <property type="resolution" value="1.70 A"/>
    <property type="chains" value="A=1836-2090"/>
</dbReference>
<dbReference type="PDB" id="5SUF">
    <property type="method" value="X-ray"/>
    <property type="resolution" value="1.51 A"/>
    <property type="chains" value="A=1836-2090"/>
</dbReference>
<dbReference type="PDB" id="5SUG">
    <property type="method" value="X-ray"/>
    <property type="resolution" value="1.53 A"/>
    <property type="chains" value="A=1836-2090"/>
</dbReference>
<dbReference type="PDB" id="5WSG">
    <property type="method" value="EM"/>
    <property type="resolution" value="4.00 A"/>
    <property type="chains" value="A=1-2413"/>
</dbReference>
<dbReference type="PDB" id="5Y88">
    <property type="method" value="EM"/>
    <property type="resolution" value="3.70 A"/>
    <property type="chains" value="A=1-2413"/>
</dbReference>
<dbReference type="PDB" id="5YLZ">
    <property type="method" value="EM"/>
    <property type="resolution" value="3.60 A"/>
    <property type="chains" value="A=1-2413"/>
</dbReference>
<dbReference type="PDB" id="5ZWM">
    <property type="method" value="EM"/>
    <property type="resolution" value="3.40 A"/>
    <property type="chains" value="A=1-2413"/>
</dbReference>
<dbReference type="PDB" id="5ZWO">
    <property type="method" value="EM"/>
    <property type="resolution" value="3.90 A"/>
    <property type="chains" value="A=1-2413"/>
</dbReference>
<dbReference type="PDB" id="6BK8">
    <property type="method" value="EM"/>
    <property type="resolution" value="3.30 A"/>
    <property type="chains" value="A=1-2413"/>
</dbReference>
<dbReference type="PDB" id="6EXN">
    <property type="method" value="EM"/>
    <property type="resolution" value="3.70 A"/>
    <property type="chains" value="A=1-2413"/>
</dbReference>
<dbReference type="PDB" id="6J6G">
    <property type="method" value="EM"/>
    <property type="resolution" value="3.20 A"/>
    <property type="chains" value="A=1-2413"/>
</dbReference>
<dbReference type="PDB" id="6J6H">
    <property type="method" value="EM"/>
    <property type="resolution" value="3.60 A"/>
    <property type="chains" value="A=1-2413"/>
</dbReference>
<dbReference type="PDB" id="6J6N">
    <property type="method" value="EM"/>
    <property type="resolution" value="3.86 A"/>
    <property type="chains" value="A=1-2413"/>
</dbReference>
<dbReference type="PDB" id="6J6Q">
    <property type="method" value="EM"/>
    <property type="resolution" value="3.70 A"/>
    <property type="chains" value="A=1-2413"/>
</dbReference>
<dbReference type="PDB" id="6TEO">
    <property type="method" value="X-ray"/>
    <property type="resolution" value="3.10 A"/>
    <property type="chains" value="B/D=315-555"/>
</dbReference>
<dbReference type="PDB" id="7B9V">
    <property type="method" value="EM"/>
    <property type="resolution" value="2.80 A"/>
    <property type="chains" value="A=1-2413"/>
</dbReference>
<dbReference type="PDB" id="7FJU">
    <property type="method" value="X-ray"/>
    <property type="resolution" value="1.63 A"/>
    <property type="chains" value="A=1836-2090"/>
</dbReference>
<dbReference type="PDB" id="7FJV">
    <property type="method" value="X-ray"/>
    <property type="resolution" value="1.63 A"/>
    <property type="chains" value="A=1836-2090"/>
</dbReference>
<dbReference type="PDB" id="7FJW">
    <property type="method" value="X-ray"/>
    <property type="resolution" value="1.63 A"/>
    <property type="chains" value="A=1836-2090"/>
</dbReference>
<dbReference type="PDB" id="7FJX">
    <property type="method" value="X-ray"/>
    <property type="resolution" value="1.59 A"/>
    <property type="chains" value="A=1836-2090"/>
</dbReference>
<dbReference type="PDB" id="7FJY">
    <property type="method" value="X-ray"/>
    <property type="resolution" value="1.63 A"/>
    <property type="chains" value="A=1836-2090"/>
</dbReference>
<dbReference type="PDB" id="7FJZ">
    <property type="method" value="X-ray"/>
    <property type="resolution" value="1.54 A"/>
    <property type="chains" value="A=1836-2090"/>
</dbReference>
<dbReference type="PDB" id="7FK0">
    <property type="method" value="X-ray"/>
    <property type="resolution" value="1.69 A"/>
    <property type="chains" value="A=1836-2090"/>
</dbReference>
<dbReference type="PDB" id="7FK1">
    <property type="method" value="X-ray"/>
    <property type="resolution" value="1.76 A"/>
    <property type="chains" value="A=1836-2090"/>
</dbReference>
<dbReference type="PDB" id="7FK2">
    <property type="method" value="X-ray"/>
    <property type="resolution" value="1.35 A"/>
    <property type="chains" value="A=1836-2090"/>
</dbReference>
<dbReference type="PDB" id="7FK3">
    <property type="method" value="X-ray"/>
    <property type="resolution" value="1.59 A"/>
    <property type="chains" value="A=1836-2090"/>
</dbReference>
<dbReference type="PDB" id="7FK4">
    <property type="method" value="X-ray"/>
    <property type="resolution" value="1.59 A"/>
    <property type="chains" value="A=1836-2090"/>
</dbReference>
<dbReference type="PDB" id="7FK5">
    <property type="method" value="X-ray"/>
    <property type="resolution" value="1.53 A"/>
    <property type="chains" value="A=1836-2090"/>
</dbReference>
<dbReference type="PDB" id="7FK6">
    <property type="method" value="X-ray"/>
    <property type="resolution" value="1.61 A"/>
    <property type="chains" value="A=1836-2090"/>
</dbReference>
<dbReference type="PDB" id="7FK7">
    <property type="method" value="X-ray"/>
    <property type="resolution" value="1.72 A"/>
    <property type="chains" value="A=1836-2090"/>
</dbReference>
<dbReference type="PDB" id="7FK8">
    <property type="method" value="X-ray"/>
    <property type="resolution" value="1.67 A"/>
    <property type="chains" value="A=1836-2090"/>
</dbReference>
<dbReference type="PDB" id="7FK9">
    <property type="method" value="X-ray"/>
    <property type="resolution" value="1.35 A"/>
    <property type="chains" value="A=1836-2090"/>
</dbReference>
<dbReference type="PDB" id="7FKA">
    <property type="method" value="X-ray"/>
    <property type="resolution" value="1.55 A"/>
    <property type="chains" value="A=1836-2090"/>
</dbReference>
<dbReference type="PDB" id="7FKB">
    <property type="method" value="X-ray"/>
    <property type="resolution" value="1.68 A"/>
    <property type="chains" value="A=1836-2090"/>
</dbReference>
<dbReference type="PDB" id="7FKC">
    <property type="method" value="X-ray"/>
    <property type="resolution" value="1.54 A"/>
    <property type="chains" value="A=1836-2090"/>
</dbReference>
<dbReference type="PDB" id="7FKD">
    <property type="method" value="X-ray"/>
    <property type="resolution" value="1.45 A"/>
    <property type="chains" value="A=1836-2090"/>
</dbReference>
<dbReference type="PDB" id="7FKE">
    <property type="method" value="X-ray"/>
    <property type="resolution" value="1.48 A"/>
    <property type="chains" value="A=1836-2090"/>
</dbReference>
<dbReference type="PDB" id="7FKF">
    <property type="method" value="X-ray"/>
    <property type="resolution" value="1.69 A"/>
    <property type="chains" value="A=1836-2090"/>
</dbReference>
<dbReference type="PDB" id="7FKG">
    <property type="method" value="X-ray"/>
    <property type="resolution" value="1.51 A"/>
    <property type="chains" value="A=1836-2090"/>
</dbReference>
<dbReference type="PDB" id="7FKH">
    <property type="method" value="X-ray"/>
    <property type="resolution" value="1.44 A"/>
    <property type="chains" value="A=1836-2090"/>
</dbReference>
<dbReference type="PDB" id="7FKI">
    <property type="method" value="X-ray"/>
    <property type="resolution" value="1.47 A"/>
    <property type="chains" value="A=1836-2090"/>
</dbReference>
<dbReference type="PDB" id="7FKJ">
    <property type="method" value="X-ray"/>
    <property type="resolution" value="1.74 A"/>
    <property type="chains" value="A=1836-2090"/>
</dbReference>
<dbReference type="PDB" id="7FKK">
    <property type="method" value="X-ray"/>
    <property type="resolution" value="1.63 A"/>
    <property type="chains" value="A=1836-2090"/>
</dbReference>
<dbReference type="PDB" id="7FKL">
    <property type="method" value="X-ray"/>
    <property type="resolution" value="1.63 A"/>
    <property type="chains" value="A=1836-2090"/>
</dbReference>
<dbReference type="PDB" id="7FKM">
    <property type="method" value="X-ray"/>
    <property type="resolution" value="1.53 A"/>
    <property type="chains" value="A=1836-2090"/>
</dbReference>
<dbReference type="PDB" id="7FKN">
    <property type="method" value="X-ray"/>
    <property type="resolution" value="1.55 A"/>
    <property type="chains" value="A=1836-2090"/>
</dbReference>
<dbReference type="PDB" id="7FKO">
    <property type="method" value="X-ray"/>
    <property type="resolution" value="1.51 A"/>
    <property type="chains" value="A=1836-2090"/>
</dbReference>
<dbReference type="PDB" id="7FKP">
    <property type="method" value="X-ray"/>
    <property type="resolution" value="1.52 A"/>
    <property type="chains" value="A=1836-2090"/>
</dbReference>
<dbReference type="PDB" id="7FKQ">
    <property type="method" value="X-ray"/>
    <property type="resolution" value="1.68 A"/>
    <property type="chains" value="A=1836-2090"/>
</dbReference>
<dbReference type="PDB" id="7FKR">
    <property type="method" value="X-ray"/>
    <property type="resolution" value="1.69 A"/>
    <property type="chains" value="A=1836-2090"/>
</dbReference>
<dbReference type="PDB" id="7FKS">
    <property type="method" value="X-ray"/>
    <property type="resolution" value="1.58 A"/>
    <property type="chains" value="A=1836-2090"/>
</dbReference>
<dbReference type="PDB" id="7FKT">
    <property type="method" value="X-ray"/>
    <property type="resolution" value="1.44 A"/>
    <property type="chains" value="A=1836-2090"/>
</dbReference>
<dbReference type="PDB" id="7FKU">
    <property type="method" value="X-ray"/>
    <property type="resolution" value="1.55 A"/>
    <property type="chains" value="A=1836-2090"/>
</dbReference>
<dbReference type="PDB" id="7FKV">
    <property type="method" value="X-ray"/>
    <property type="resolution" value="1.75 A"/>
    <property type="chains" value="A=1836-2090"/>
</dbReference>
<dbReference type="PDB" id="7FKW">
    <property type="method" value="X-ray"/>
    <property type="resolution" value="1.47 A"/>
    <property type="chains" value="A=1836-2090"/>
</dbReference>
<dbReference type="PDB" id="7FKX">
    <property type="method" value="X-ray"/>
    <property type="resolution" value="1.85 A"/>
    <property type="chains" value="A=1836-2090"/>
</dbReference>
<dbReference type="PDB" id="7FKY">
    <property type="method" value="X-ray"/>
    <property type="resolution" value="1.59 A"/>
    <property type="chains" value="A=1836-2090"/>
</dbReference>
<dbReference type="PDB" id="7FKZ">
    <property type="method" value="X-ray"/>
    <property type="resolution" value="1.58 A"/>
    <property type="chains" value="A=1836-2090"/>
</dbReference>
<dbReference type="PDB" id="7FL0">
    <property type="method" value="X-ray"/>
    <property type="resolution" value="1.51 A"/>
    <property type="chains" value="A=1836-2090"/>
</dbReference>
<dbReference type="PDB" id="7FL1">
    <property type="method" value="X-ray"/>
    <property type="resolution" value="1.55 A"/>
    <property type="chains" value="A=1836-2090"/>
</dbReference>
<dbReference type="PDB" id="7FL2">
    <property type="method" value="X-ray"/>
    <property type="resolution" value="1.58 A"/>
    <property type="chains" value="A=1836-2090"/>
</dbReference>
<dbReference type="PDB" id="7FL3">
    <property type="method" value="X-ray"/>
    <property type="resolution" value="1.51 A"/>
    <property type="chains" value="A=1836-2090"/>
</dbReference>
<dbReference type="PDB" id="7FL4">
    <property type="method" value="X-ray"/>
    <property type="resolution" value="1.51 A"/>
    <property type="chains" value="A=1836-2090"/>
</dbReference>
<dbReference type="PDB" id="7FL5">
    <property type="method" value="X-ray"/>
    <property type="resolution" value="1.89 A"/>
    <property type="chains" value="A=1836-2090"/>
</dbReference>
<dbReference type="PDB" id="7FL6">
    <property type="method" value="X-ray"/>
    <property type="resolution" value="1.58 A"/>
    <property type="chains" value="A=1836-2090"/>
</dbReference>
<dbReference type="PDB" id="7FL7">
    <property type="method" value="X-ray"/>
    <property type="resolution" value="1.72 A"/>
    <property type="chains" value="A=1836-2090"/>
</dbReference>
<dbReference type="PDB" id="7FL8">
    <property type="method" value="X-ray"/>
    <property type="resolution" value="1.51 A"/>
    <property type="chains" value="A=1836-2090"/>
</dbReference>
<dbReference type="PDB" id="7FL9">
    <property type="method" value="X-ray"/>
    <property type="resolution" value="1.59 A"/>
    <property type="chains" value="A=1836-2090"/>
</dbReference>
<dbReference type="PDB" id="7FLA">
    <property type="method" value="X-ray"/>
    <property type="resolution" value="1.87 A"/>
    <property type="chains" value="A=1836-2090"/>
</dbReference>
<dbReference type="PDB" id="7FLB">
    <property type="method" value="X-ray"/>
    <property type="resolution" value="1.57 A"/>
    <property type="chains" value="A=1836-2090"/>
</dbReference>
<dbReference type="PDB" id="7FLC">
    <property type="method" value="X-ray"/>
    <property type="resolution" value="1.95 A"/>
    <property type="chains" value="A=1836-2090"/>
</dbReference>
<dbReference type="PDB" id="7FLD">
    <property type="method" value="X-ray"/>
    <property type="resolution" value="1.51 A"/>
    <property type="chains" value="A=1836-2090"/>
</dbReference>
<dbReference type="PDB" id="7FLE">
    <property type="method" value="X-ray"/>
    <property type="resolution" value="1.57 A"/>
    <property type="chains" value="A=1836-2090"/>
</dbReference>
<dbReference type="PDB" id="7FLF">
    <property type="method" value="X-ray"/>
    <property type="resolution" value="1.54 A"/>
    <property type="chains" value="A=1836-2090"/>
</dbReference>
<dbReference type="PDB" id="7FLG">
    <property type="method" value="X-ray"/>
    <property type="resolution" value="1.58 A"/>
    <property type="chains" value="A=1836-2090"/>
</dbReference>
<dbReference type="PDB" id="7FLH">
    <property type="method" value="X-ray"/>
    <property type="resolution" value="1.67 A"/>
    <property type="chains" value="A=1836-2090"/>
</dbReference>
<dbReference type="PDB" id="7FLI">
    <property type="method" value="X-ray"/>
    <property type="resolution" value="1.75 A"/>
    <property type="chains" value="A=1836-2090"/>
</dbReference>
<dbReference type="PDB" id="7FLJ">
    <property type="method" value="X-ray"/>
    <property type="resolution" value="1.47 A"/>
    <property type="chains" value="A=1836-2090"/>
</dbReference>
<dbReference type="PDB" id="7FLK">
    <property type="method" value="X-ray"/>
    <property type="resolution" value="1.62 A"/>
    <property type="chains" value="A=1836-2090"/>
</dbReference>
<dbReference type="PDB" id="7FLL">
    <property type="method" value="X-ray"/>
    <property type="resolution" value="1.48 A"/>
    <property type="chains" value="A=1836-2090"/>
</dbReference>
<dbReference type="PDB" id="7FLM">
    <property type="method" value="X-ray"/>
    <property type="resolution" value="1.55 A"/>
    <property type="chains" value="A=1836-2090"/>
</dbReference>
<dbReference type="PDB" id="7FLN">
    <property type="method" value="X-ray"/>
    <property type="resolution" value="1.57 A"/>
    <property type="chains" value="A=1836-2090"/>
</dbReference>
<dbReference type="PDB" id="7FLO">
    <property type="method" value="X-ray"/>
    <property type="resolution" value="1.58 A"/>
    <property type="chains" value="A=1836-2090"/>
</dbReference>
<dbReference type="PDB" id="7FLP">
    <property type="method" value="X-ray"/>
    <property type="resolution" value="1.58 A"/>
    <property type="chains" value="A=1836-2090"/>
</dbReference>
<dbReference type="PDB" id="7FLQ">
    <property type="method" value="X-ray"/>
    <property type="resolution" value="1.73 A"/>
    <property type="chains" value="A=1836-2090"/>
</dbReference>
<dbReference type="PDB" id="7FLR">
    <property type="method" value="X-ray"/>
    <property type="resolution" value="1.63 A"/>
    <property type="chains" value="A=1836-2090"/>
</dbReference>
<dbReference type="PDB" id="7FLS">
    <property type="method" value="X-ray"/>
    <property type="resolution" value="1.51 A"/>
    <property type="chains" value="A=1836-2090"/>
</dbReference>
<dbReference type="PDB" id="7FLT">
    <property type="method" value="X-ray"/>
    <property type="resolution" value="1.73 A"/>
    <property type="chains" value="A=1836-2090"/>
</dbReference>
<dbReference type="PDB" id="7FLU">
    <property type="method" value="X-ray"/>
    <property type="resolution" value="1.51 A"/>
    <property type="chains" value="A=1836-2090"/>
</dbReference>
<dbReference type="PDB" id="7FLV">
    <property type="method" value="X-ray"/>
    <property type="resolution" value="1.51 A"/>
    <property type="chains" value="A=1836-2090"/>
</dbReference>
<dbReference type="PDB" id="7FLW">
    <property type="method" value="X-ray"/>
    <property type="resolution" value="1.55 A"/>
    <property type="chains" value="A=1836-2090"/>
</dbReference>
<dbReference type="PDB" id="7FLX">
    <property type="method" value="X-ray"/>
    <property type="resolution" value="1.75 A"/>
    <property type="chains" value="A=1836-2090"/>
</dbReference>
<dbReference type="PDB" id="7FLY">
    <property type="method" value="X-ray"/>
    <property type="resolution" value="1.55 A"/>
    <property type="chains" value="A=1836-2090"/>
</dbReference>
<dbReference type="PDB" id="7FLZ">
    <property type="method" value="X-ray"/>
    <property type="resolution" value="1.52 A"/>
    <property type="chains" value="A=1836-2090"/>
</dbReference>
<dbReference type="PDB" id="7FM0">
    <property type="method" value="X-ray"/>
    <property type="resolution" value="1.61 A"/>
    <property type="chains" value="A=1836-2090"/>
</dbReference>
<dbReference type="PDB" id="7FM1">
    <property type="method" value="X-ray"/>
    <property type="resolution" value="1.50 A"/>
    <property type="chains" value="A=1836-2090"/>
</dbReference>
<dbReference type="PDB" id="7FM2">
    <property type="method" value="X-ray"/>
    <property type="resolution" value="1.72 A"/>
    <property type="chains" value="A=1836-2090"/>
</dbReference>
<dbReference type="PDB" id="7FM3">
    <property type="method" value="X-ray"/>
    <property type="resolution" value="1.65 A"/>
    <property type="chains" value="A=1836-2090"/>
</dbReference>
<dbReference type="PDB" id="7FM4">
    <property type="method" value="X-ray"/>
    <property type="resolution" value="1.62 A"/>
    <property type="chains" value="A=1836-2090"/>
</dbReference>
<dbReference type="PDB" id="7FM5">
    <property type="method" value="X-ray"/>
    <property type="resolution" value="1.56 A"/>
    <property type="chains" value="A=1836-2090"/>
</dbReference>
<dbReference type="PDB" id="7FM6">
    <property type="method" value="X-ray"/>
    <property type="resolution" value="1.55 A"/>
    <property type="chains" value="A=1836-2090"/>
</dbReference>
<dbReference type="PDB" id="7FM7">
    <property type="method" value="X-ray"/>
    <property type="resolution" value="1.51 A"/>
    <property type="chains" value="A=1836-2090"/>
</dbReference>
<dbReference type="PDB" id="7FM8">
    <property type="method" value="X-ray"/>
    <property type="resolution" value="1.55 A"/>
    <property type="chains" value="A=1836-2090"/>
</dbReference>
<dbReference type="PDB" id="7FM9">
    <property type="method" value="X-ray"/>
    <property type="resolution" value="1.59 A"/>
    <property type="chains" value="A=1836-2090"/>
</dbReference>
<dbReference type="PDB" id="7FMA">
    <property type="method" value="X-ray"/>
    <property type="resolution" value="1.41 A"/>
    <property type="chains" value="A=1836-2090"/>
</dbReference>
<dbReference type="PDB" id="7FMB">
    <property type="method" value="X-ray"/>
    <property type="resolution" value="1.55 A"/>
    <property type="chains" value="A=1836-2090"/>
</dbReference>
<dbReference type="PDB" id="7FMC">
    <property type="method" value="X-ray"/>
    <property type="resolution" value="1.51 A"/>
    <property type="chains" value="A=1836-2090"/>
</dbReference>
<dbReference type="PDB" id="7FMD">
    <property type="method" value="X-ray"/>
    <property type="resolution" value="1.68 A"/>
    <property type="chains" value="A=1836-2090"/>
</dbReference>
<dbReference type="PDB" id="7FME">
    <property type="method" value="X-ray"/>
    <property type="resolution" value="1.44 A"/>
    <property type="chains" value="A=1836-2090"/>
</dbReference>
<dbReference type="PDB" id="7FMF">
    <property type="method" value="X-ray"/>
    <property type="resolution" value="1.65 A"/>
    <property type="chains" value="A=1836-2090"/>
</dbReference>
<dbReference type="PDB" id="7FMG">
    <property type="method" value="X-ray"/>
    <property type="resolution" value="1.71 A"/>
    <property type="chains" value="A=1836-2090"/>
</dbReference>
<dbReference type="PDB" id="7FMH">
    <property type="method" value="X-ray"/>
    <property type="resolution" value="1.51 A"/>
    <property type="chains" value="A=1836-2090"/>
</dbReference>
<dbReference type="PDB" id="7FMI">
    <property type="method" value="X-ray"/>
    <property type="resolution" value="1.34 A"/>
    <property type="chains" value="A=1836-2090"/>
</dbReference>
<dbReference type="PDB" id="7FMJ">
    <property type="method" value="X-ray"/>
    <property type="resolution" value="1.50 A"/>
    <property type="chains" value="A=1836-2090"/>
</dbReference>
<dbReference type="PDB" id="7FMK">
    <property type="method" value="X-ray"/>
    <property type="resolution" value="1.47 A"/>
    <property type="chains" value="A=1836-2090"/>
</dbReference>
<dbReference type="PDB" id="7FML">
    <property type="method" value="X-ray"/>
    <property type="resolution" value="1.58 A"/>
    <property type="chains" value="A=1836-2090"/>
</dbReference>
<dbReference type="PDB" id="7FMM">
    <property type="method" value="X-ray"/>
    <property type="resolution" value="1.69 A"/>
    <property type="chains" value="A=1836-2090"/>
</dbReference>
<dbReference type="PDB" id="7FMN">
    <property type="method" value="X-ray"/>
    <property type="resolution" value="1.60 A"/>
    <property type="chains" value="A=1836-2090"/>
</dbReference>
<dbReference type="PDB" id="7FMO">
    <property type="method" value="X-ray"/>
    <property type="resolution" value="1.67 A"/>
    <property type="chains" value="A=1836-2090"/>
</dbReference>
<dbReference type="PDB" id="7FMP">
    <property type="method" value="X-ray"/>
    <property type="resolution" value="1.72 A"/>
    <property type="chains" value="A=1836-2090"/>
</dbReference>
<dbReference type="PDB" id="7FMQ">
    <property type="method" value="X-ray"/>
    <property type="resolution" value="1.58 A"/>
    <property type="chains" value="A=1836-2090"/>
</dbReference>
<dbReference type="PDB" id="7FMR">
    <property type="method" value="X-ray"/>
    <property type="resolution" value="1.58 A"/>
    <property type="chains" value="A=1836-2090"/>
</dbReference>
<dbReference type="PDB" id="7FMS">
    <property type="method" value="X-ray"/>
    <property type="resolution" value="1.58 A"/>
    <property type="chains" value="A=1836-2090"/>
</dbReference>
<dbReference type="PDB" id="7FMT">
    <property type="method" value="X-ray"/>
    <property type="resolution" value="1.67 A"/>
    <property type="chains" value="A=1836-2090"/>
</dbReference>
<dbReference type="PDB" id="7FMU">
    <property type="method" value="X-ray"/>
    <property type="resolution" value="1.81 A"/>
    <property type="chains" value="A=1836-2090"/>
</dbReference>
<dbReference type="PDB" id="7FMV">
    <property type="method" value="X-ray"/>
    <property type="resolution" value="1.61 A"/>
    <property type="chains" value="A=1836-2090"/>
</dbReference>
<dbReference type="PDB" id="7FMW">
    <property type="method" value="X-ray"/>
    <property type="resolution" value="1.51 A"/>
    <property type="chains" value="A=1836-2090"/>
</dbReference>
<dbReference type="PDB" id="7FMX">
    <property type="method" value="X-ray"/>
    <property type="resolution" value="1.51 A"/>
    <property type="chains" value="A=1836-2090"/>
</dbReference>
<dbReference type="PDB" id="7FMY">
    <property type="method" value="X-ray"/>
    <property type="resolution" value="1.65 A"/>
    <property type="chains" value="A=1836-2090"/>
</dbReference>
<dbReference type="PDB" id="7FMZ">
    <property type="method" value="X-ray"/>
    <property type="resolution" value="1.67 A"/>
    <property type="chains" value="A=1836-2090"/>
</dbReference>
<dbReference type="PDB" id="7FN0">
    <property type="method" value="X-ray"/>
    <property type="resolution" value="1.59 A"/>
    <property type="chains" value="A=1836-2090"/>
</dbReference>
<dbReference type="PDB" id="7FN1">
    <property type="method" value="X-ray"/>
    <property type="resolution" value="1.44 A"/>
    <property type="chains" value="A=1836-2090"/>
</dbReference>
<dbReference type="PDB" id="7FN2">
    <property type="method" value="X-ray"/>
    <property type="resolution" value="1.62 A"/>
    <property type="chains" value="A=1836-2090"/>
</dbReference>
<dbReference type="PDB" id="7FN3">
    <property type="method" value="X-ray"/>
    <property type="resolution" value="1.63 A"/>
    <property type="chains" value="A=1836-2090"/>
</dbReference>
<dbReference type="PDB" id="7FN4">
    <property type="method" value="X-ray"/>
    <property type="resolution" value="1.72 A"/>
    <property type="chains" value="A=1836-2090"/>
</dbReference>
<dbReference type="PDB" id="7FN5">
    <property type="method" value="X-ray"/>
    <property type="resolution" value="1.69 A"/>
    <property type="chains" value="A=1836-2090"/>
</dbReference>
<dbReference type="PDB" id="7FN6">
    <property type="method" value="X-ray"/>
    <property type="resolution" value="1.50 A"/>
    <property type="chains" value="A=1836-2090"/>
</dbReference>
<dbReference type="PDB" id="7FN7">
    <property type="method" value="X-ray"/>
    <property type="resolution" value="1.51 A"/>
    <property type="chains" value="A=1836-2090"/>
</dbReference>
<dbReference type="PDB" id="7FN8">
    <property type="method" value="X-ray"/>
    <property type="resolution" value="1.41 A"/>
    <property type="chains" value="A=1836-2090"/>
</dbReference>
<dbReference type="PDB" id="7FN9">
    <property type="method" value="X-ray"/>
    <property type="resolution" value="1.55 A"/>
    <property type="chains" value="A=1836-2090"/>
</dbReference>
<dbReference type="PDB" id="7FNA">
    <property type="method" value="X-ray"/>
    <property type="resolution" value="1.69 A"/>
    <property type="chains" value="A=1836-2090"/>
</dbReference>
<dbReference type="PDB" id="7FNB">
    <property type="method" value="X-ray"/>
    <property type="resolution" value="1.55 A"/>
    <property type="chains" value="A=1836-2090"/>
</dbReference>
<dbReference type="PDB" id="7FNC">
    <property type="method" value="X-ray"/>
    <property type="resolution" value="1.55 A"/>
    <property type="chains" value="A=1836-2090"/>
</dbReference>
<dbReference type="PDB" id="7FND">
    <property type="method" value="X-ray"/>
    <property type="resolution" value="1.51 A"/>
    <property type="chains" value="A=1836-2090"/>
</dbReference>
<dbReference type="PDB" id="7FNE">
    <property type="method" value="X-ray"/>
    <property type="resolution" value="1.57 A"/>
    <property type="chains" value="A=1836-2090"/>
</dbReference>
<dbReference type="PDB" id="7FNF">
    <property type="method" value="X-ray"/>
    <property type="resolution" value="1.54 A"/>
    <property type="chains" value="A=1836-2090"/>
</dbReference>
<dbReference type="PDB" id="7FNG">
    <property type="method" value="X-ray"/>
    <property type="resolution" value="1.60 A"/>
    <property type="chains" value="A=1836-2090"/>
</dbReference>
<dbReference type="PDB" id="7FNH">
    <property type="method" value="X-ray"/>
    <property type="resolution" value="1.57 A"/>
    <property type="chains" value="A=1836-2090"/>
</dbReference>
<dbReference type="PDB" id="7FNI">
    <property type="method" value="X-ray"/>
    <property type="resolution" value="1.55 A"/>
    <property type="chains" value="A=1836-2090"/>
</dbReference>
<dbReference type="PDB" id="7FNJ">
    <property type="method" value="X-ray"/>
    <property type="resolution" value="1.57 A"/>
    <property type="chains" value="A=1836-2090"/>
</dbReference>
<dbReference type="PDB" id="7FNK">
    <property type="method" value="X-ray"/>
    <property type="resolution" value="1.57 A"/>
    <property type="chains" value="A=1836-2090"/>
</dbReference>
<dbReference type="PDB" id="7FNL">
    <property type="method" value="X-ray"/>
    <property type="resolution" value="1.67 A"/>
    <property type="chains" value="A=1836-2090"/>
</dbReference>
<dbReference type="PDB" id="7FNM">
    <property type="method" value="X-ray"/>
    <property type="resolution" value="1.72 A"/>
    <property type="chains" value="A=1836-2090"/>
</dbReference>
<dbReference type="PDB" id="7FNN">
    <property type="method" value="X-ray"/>
    <property type="resolution" value="1.65 A"/>
    <property type="chains" value="A=1836-2090"/>
</dbReference>
<dbReference type="PDB" id="7FNO">
    <property type="method" value="X-ray"/>
    <property type="resolution" value="1.65 A"/>
    <property type="chains" value="A=1836-2090"/>
</dbReference>
<dbReference type="PDB" id="7FNP">
    <property type="method" value="X-ray"/>
    <property type="resolution" value="1.51 A"/>
    <property type="chains" value="A=1836-2090"/>
</dbReference>
<dbReference type="PDB" id="7FNQ">
    <property type="method" value="X-ray"/>
    <property type="resolution" value="1.51 A"/>
    <property type="chains" value="A=1836-2090"/>
</dbReference>
<dbReference type="PDB" id="7FNR">
    <property type="method" value="X-ray"/>
    <property type="resolution" value="1.60 A"/>
    <property type="chains" value="A=1836-2090"/>
</dbReference>
<dbReference type="PDB" id="7FNS">
    <property type="method" value="X-ray"/>
    <property type="resolution" value="1.45 A"/>
    <property type="chains" value="A=1836-2090"/>
</dbReference>
<dbReference type="PDB" id="7FNT">
    <property type="method" value="X-ray"/>
    <property type="resolution" value="1.61 A"/>
    <property type="chains" value="A=1836-2090"/>
</dbReference>
<dbReference type="PDB" id="7FNU">
    <property type="method" value="X-ray"/>
    <property type="resolution" value="1.54 A"/>
    <property type="chains" value="A=1836-2090"/>
</dbReference>
<dbReference type="PDB" id="7FNV">
    <property type="method" value="X-ray"/>
    <property type="resolution" value="1.54 A"/>
    <property type="chains" value="A=1836-2090"/>
</dbReference>
<dbReference type="PDB" id="7FNW">
    <property type="method" value="X-ray"/>
    <property type="resolution" value="1.90 A"/>
    <property type="chains" value="A=1836-2090"/>
</dbReference>
<dbReference type="PDB" id="7FNX">
    <property type="method" value="X-ray"/>
    <property type="resolution" value="1.72 A"/>
    <property type="chains" value="A=1836-2090"/>
</dbReference>
<dbReference type="PDB" id="7FNY">
    <property type="method" value="X-ray"/>
    <property type="resolution" value="1.71 A"/>
    <property type="chains" value="A=1836-2090"/>
</dbReference>
<dbReference type="PDB" id="7FNZ">
    <property type="method" value="X-ray"/>
    <property type="resolution" value="1.66 A"/>
    <property type="chains" value="A=1836-2090"/>
</dbReference>
<dbReference type="PDB" id="7FO0">
    <property type="method" value="X-ray"/>
    <property type="resolution" value="1.83 A"/>
    <property type="chains" value="A=1836-2090"/>
</dbReference>
<dbReference type="PDB" id="7FO1">
    <property type="method" value="X-ray"/>
    <property type="resolution" value="1.50 A"/>
    <property type="chains" value="A=1836-2090"/>
</dbReference>
<dbReference type="PDB" id="7FO2">
    <property type="method" value="X-ray"/>
    <property type="resolution" value="2.01 A"/>
    <property type="chains" value="A=1836-2090"/>
</dbReference>
<dbReference type="PDB" id="7FO3">
    <property type="method" value="X-ray"/>
    <property type="resolution" value="1.59 A"/>
    <property type="chains" value="A=1836-2090"/>
</dbReference>
<dbReference type="PDB" id="7FO4">
    <property type="method" value="X-ray"/>
    <property type="resolution" value="1.53 A"/>
    <property type="chains" value="A=1836-2090"/>
</dbReference>
<dbReference type="PDB" id="7FO5">
    <property type="method" value="X-ray"/>
    <property type="resolution" value="1.71 A"/>
    <property type="chains" value="A=1836-2090"/>
</dbReference>
<dbReference type="PDB" id="7FO6">
    <property type="method" value="X-ray"/>
    <property type="resolution" value="1.57 A"/>
    <property type="chains" value="A=1836-2090"/>
</dbReference>
<dbReference type="PDB" id="7FO7">
    <property type="method" value="X-ray"/>
    <property type="resolution" value="1.45 A"/>
    <property type="chains" value="A=1836-2090"/>
</dbReference>
<dbReference type="PDB" id="7FO8">
    <property type="method" value="X-ray"/>
    <property type="resolution" value="1.72 A"/>
    <property type="chains" value="A=1836-2090"/>
</dbReference>
<dbReference type="PDB" id="7FO9">
    <property type="method" value="X-ray"/>
    <property type="resolution" value="1.67 A"/>
    <property type="chains" value="A=1836-2090"/>
</dbReference>
<dbReference type="PDB" id="7FOA">
    <property type="method" value="X-ray"/>
    <property type="resolution" value="1.67 A"/>
    <property type="chains" value="A=1836-2090"/>
</dbReference>
<dbReference type="PDB" id="7FOB">
    <property type="method" value="X-ray"/>
    <property type="resolution" value="1.72 A"/>
    <property type="chains" value="A=1836-2090"/>
</dbReference>
<dbReference type="PDB" id="7FOC">
    <property type="method" value="X-ray"/>
    <property type="resolution" value="1.90 A"/>
    <property type="chains" value="A=1836-2090"/>
</dbReference>
<dbReference type="PDB" id="7FOD">
    <property type="method" value="X-ray"/>
    <property type="resolution" value="1.59 A"/>
    <property type="chains" value="A=1836-2090"/>
</dbReference>
<dbReference type="PDB" id="7FOE">
    <property type="method" value="X-ray"/>
    <property type="resolution" value="1.65 A"/>
    <property type="chains" value="A=1836-2090"/>
</dbReference>
<dbReference type="PDB" id="7FOF">
    <property type="method" value="X-ray"/>
    <property type="resolution" value="1.77 A"/>
    <property type="chains" value="A=1836-2090"/>
</dbReference>
<dbReference type="PDB" id="7FOG">
    <property type="method" value="X-ray"/>
    <property type="resolution" value="1.41 A"/>
    <property type="chains" value="A=1836-2090"/>
</dbReference>
<dbReference type="PDB" id="7FOH">
    <property type="method" value="X-ray"/>
    <property type="resolution" value="1.69 A"/>
    <property type="chains" value="A=1836-2090"/>
</dbReference>
<dbReference type="PDB" id="7FOI">
    <property type="method" value="X-ray"/>
    <property type="resolution" value="1.55 A"/>
    <property type="chains" value="A=1836-2090"/>
</dbReference>
<dbReference type="PDB" id="7FOJ">
    <property type="method" value="X-ray"/>
    <property type="resolution" value="1.65 A"/>
    <property type="chains" value="A=1836-2090"/>
</dbReference>
<dbReference type="PDB" id="7FOK">
    <property type="method" value="X-ray"/>
    <property type="resolution" value="1.72 A"/>
    <property type="chains" value="A=1836-2090"/>
</dbReference>
<dbReference type="PDB" id="7FOL">
    <property type="method" value="X-ray"/>
    <property type="resolution" value="1.55 A"/>
    <property type="chains" value="A=1836-2090"/>
</dbReference>
<dbReference type="PDB" id="7FOM">
    <property type="method" value="X-ray"/>
    <property type="resolution" value="1.51 A"/>
    <property type="chains" value="A=1836-2090"/>
</dbReference>
<dbReference type="PDB" id="7FON">
    <property type="method" value="X-ray"/>
    <property type="resolution" value="1.51 A"/>
    <property type="chains" value="A=1836-2090"/>
</dbReference>
<dbReference type="PDB" id="7FOO">
    <property type="method" value="X-ray"/>
    <property type="resolution" value="1.59 A"/>
    <property type="chains" value="A=1836-2090"/>
</dbReference>
<dbReference type="PDB" id="7FOP">
    <property type="method" value="X-ray"/>
    <property type="resolution" value="1.66 A"/>
    <property type="chains" value="A=1836-2090"/>
</dbReference>
<dbReference type="PDB" id="7FOQ">
    <property type="method" value="X-ray"/>
    <property type="resolution" value="1.74 A"/>
    <property type="chains" value="A=1836-2090"/>
</dbReference>
<dbReference type="PDB" id="7FOR">
    <property type="method" value="X-ray"/>
    <property type="resolution" value="2.03 A"/>
    <property type="chains" value="A=1836-2090"/>
</dbReference>
<dbReference type="PDB" id="7FOS">
    <property type="method" value="X-ray"/>
    <property type="resolution" value="1.67 A"/>
    <property type="chains" value="A=1836-2090"/>
</dbReference>
<dbReference type="PDB" id="7FOT">
    <property type="method" value="X-ray"/>
    <property type="resolution" value="1.56 A"/>
    <property type="chains" value="A=1836-2090"/>
</dbReference>
<dbReference type="PDB" id="7FOU">
    <property type="method" value="X-ray"/>
    <property type="resolution" value="1.59 A"/>
    <property type="chains" value="A=1836-2090"/>
</dbReference>
<dbReference type="PDB" id="7FOV">
    <property type="method" value="X-ray"/>
    <property type="resolution" value="1.48 A"/>
    <property type="chains" value="A=1836-2090"/>
</dbReference>
<dbReference type="PDB" id="7FOW">
    <property type="method" value="X-ray"/>
    <property type="resolution" value="1.51 A"/>
    <property type="chains" value="A=1836-2090"/>
</dbReference>
<dbReference type="PDB" id="7FOX">
    <property type="method" value="X-ray"/>
    <property type="resolution" value="1.47 A"/>
    <property type="chains" value="A=1836-2090"/>
</dbReference>
<dbReference type="PDB" id="7FOY">
    <property type="method" value="X-ray"/>
    <property type="resolution" value="1.55 A"/>
    <property type="chains" value="A=1836-2090"/>
</dbReference>
<dbReference type="PDB" id="7FOZ">
    <property type="method" value="X-ray"/>
    <property type="resolution" value="1.83 A"/>
    <property type="chains" value="A=1836-2090"/>
</dbReference>
<dbReference type="PDB" id="7FP0">
    <property type="method" value="X-ray"/>
    <property type="resolution" value="1.54 A"/>
    <property type="chains" value="A=1836-2090"/>
</dbReference>
<dbReference type="PDB" id="7FP1">
    <property type="method" value="X-ray"/>
    <property type="resolution" value="1.43 A"/>
    <property type="chains" value="A=1836-2090"/>
</dbReference>
<dbReference type="PDB" id="7FP2">
    <property type="method" value="X-ray"/>
    <property type="resolution" value="1.64 A"/>
    <property type="chains" value="A=1836-2090"/>
</dbReference>
<dbReference type="PDB" id="7FP3">
    <property type="method" value="X-ray"/>
    <property type="resolution" value="1.76 A"/>
    <property type="chains" value="A=1836-2090"/>
</dbReference>
<dbReference type="PDB" id="7FP4">
    <property type="method" value="X-ray"/>
    <property type="resolution" value="1.45 A"/>
    <property type="chains" value="A=1836-2090"/>
</dbReference>
<dbReference type="PDB" id="7FP5">
    <property type="method" value="X-ray"/>
    <property type="resolution" value="1.53 A"/>
    <property type="chains" value="A=1836-2090"/>
</dbReference>
<dbReference type="PDB" id="7FP6">
    <property type="method" value="X-ray"/>
    <property type="resolution" value="1.61 A"/>
    <property type="chains" value="A=1836-2090"/>
</dbReference>
<dbReference type="PDB" id="7FP7">
    <property type="method" value="X-ray"/>
    <property type="resolution" value="1.47 A"/>
    <property type="chains" value="A=1836-2090"/>
</dbReference>
<dbReference type="PDB" id="7FP8">
    <property type="method" value="X-ray"/>
    <property type="resolution" value="1.59 A"/>
    <property type="chains" value="A=1836-2090"/>
</dbReference>
<dbReference type="PDB" id="7FP9">
    <property type="method" value="X-ray"/>
    <property type="resolution" value="1.90 A"/>
    <property type="chains" value="A=1836-2090"/>
</dbReference>
<dbReference type="PDB" id="7FPA">
    <property type="method" value="X-ray"/>
    <property type="resolution" value="1.86 A"/>
    <property type="chains" value="A=1836-2090"/>
</dbReference>
<dbReference type="PDB" id="7FPB">
    <property type="method" value="X-ray"/>
    <property type="resolution" value="2.02 A"/>
    <property type="chains" value="A=1836-2090"/>
</dbReference>
<dbReference type="PDB" id="7FPC">
    <property type="method" value="X-ray"/>
    <property type="resolution" value="1.55 A"/>
    <property type="chains" value="A=1836-2090"/>
</dbReference>
<dbReference type="PDB" id="7FPD">
    <property type="method" value="X-ray"/>
    <property type="resolution" value="1.61 A"/>
    <property type="chains" value="A=1836-2090"/>
</dbReference>
<dbReference type="PDB" id="7FPE">
    <property type="method" value="X-ray"/>
    <property type="resolution" value="1.55 A"/>
    <property type="chains" value="A=1836-2090"/>
</dbReference>
<dbReference type="PDB" id="7FPF">
    <property type="method" value="X-ray"/>
    <property type="resolution" value="1.55 A"/>
    <property type="chains" value="A=1836-2090"/>
</dbReference>
<dbReference type="PDB" id="7FPG">
    <property type="method" value="X-ray"/>
    <property type="resolution" value="1.60 A"/>
    <property type="chains" value="A=1836-2090"/>
</dbReference>
<dbReference type="PDB" id="7FPH">
    <property type="method" value="X-ray"/>
    <property type="resolution" value="1.91 A"/>
    <property type="chains" value="A=1836-2090"/>
</dbReference>
<dbReference type="PDB" id="7FPI">
    <property type="method" value="X-ray"/>
    <property type="resolution" value="1.63 A"/>
    <property type="chains" value="A=1836-2090"/>
</dbReference>
<dbReference type="PDB" id="7FPJ">
    <property type="method" value="X-ray"/>
    <property type="resolution" value="1.59 A"/>
    <property type="chains" value="A=1836-2090"/>
</dbReference>
<dbReference type="PDB" id="7FPK">
    <property type="method" value="X-ray"/>
    <property type="resolution" value="1.59 A"/>
    <property type="chains" value="A=1836-2090"/>
</dbReference>
<dbReference type="PDB" id="9DTR">
    <property type="method" value="EM"/>
    <property type="resolution" value="2.31 A"/>
    <property type="chains" value="A=1-2413"/>
</dbReference>
<dbReference type="PDBsum" id="2OG4"/>
<dbReference type="PDBsum" id="3E66"/>
<dbReference type="PDBsum" id="3E9O"/>
<dbReference type="PDBsum" id="3E9P"/>
<dbReference type="PDBsum" id="3JCM"/>
<dbReference type="PDBsum" id="3SBG"/>
<dbReference type="PDBsum" id="3SBT"/>
<dbReference type="PDBsum" id="3ZEF"/>
<dbReference type="PDBsum" id="4BGD"/>
<dbReference type="PDBsum" id="4I43"/>
<dbReference type="PDBsum" id="4ILG"/>
<dbReference type="PDBsum" id="4ILH"/>
<dbReference type="PDBsum" id="4ILJ"/>
<dbReference type="PDBsum" id="5DCA"/>
<dbReference type="PDBsum" id="5GAM"/>
<dbReference type="PDBsum" id="5GAN"/>
<dbReference type="PDBsum" id="5GAO"/>
<dbReference type="PDBsum" id="5GAP"/>
<dbReference type="PDBsum" id="5GM6"/>
<dbReference type="PDBsum" id="5GMK"/>
<dbReference type="PDBsum" id="5LJ3"/>
<dbReference type="PDBsum" id="5LJ5"/>
<dbReference type="PDBsum" id="5LQW"/>
<dbReference type="PDBsum" id="5M52"/>
<dbReference type="PDBsum" id="5M5P"/>
<dbReference type="PDBsum" id="5MPS"/>
<dbReference type="PDBsum" id="5MQ0"/>
<dbReference type="PDBsum" id="5NRL"/>
<dbReference type="PDBsum" id="5QY1"/>
<dbReference type="PDBsum" id="5QY2"/>
<dbReference type="PDBsum" id="5QY3"/>
<dbReference type="PDBsum" id="5QY4"/>
<dbReference type="PDBsum" id="5QY5"/>
<dbReference type="PDBsum" id="5QY6"/>
<dbReference type="PDBsum" id="5QY7"/>
<dbReference type="PDBsum" id="5QY8"/>
<dbReference type="PDBsum" id="5QY9"/>
<dbReference type="PDBsum" id="5QYA"/>
<dbReference type="PDBsum" id="5QYB"/>
<dbReference type="PDBsum" id="5QYC"/>
<dbReference type="PDBsum" id="5QYD"/>
<dbReference type="PDBsum" id="5QYE"/>
<dbReference type="PDBsum" id="5QYF"/>
<dbReference type="PDBsum" id="5QYG"/>
<dbReference type="PDBsum" id="5QYH"/>
<dbReference type="PDBsum" id="5QYI"/>
<dbReference type="PDBsum" id="5QYJ"/>
<dbReference type="PDBsum" id="5QYK"/>
<dbReference type="PDBsum" id="5QYL"/>
<dbReference type="PDBsum" id="5QYM"/>
<dbReference type="PDBsum" id="5QYN"/>
<dbReference type="PDBsum" id="5QYO"/>
<dbReference type="PDBsum" id="5QYP"/>
<dbReference type="PDBsum" id="5QYQ"/>
<dbReference type="PDBsum" id="5QYR"/>
<dbReference type="PDBsum" id="5QYS"/>
<dbReference type="PDBsum" id="5QYT"/>
<dbReference type="PDBsum" id="5QYU"/>
<dbReference type="PDBsum" id="5QYV"/>
<dbReference type="PDBsum" id="5QYW"/>
<dbReference type="PDBsum" id="5QYX"/>
<dbReference type="PDBsum" id="5QYY"/>
<dbReference type="PDBsum" id="5QYZ"/>
<dbReference type="PDBsum" id="5QZ0"/>
<dbReference type="PDBsum" id="5QZ1"/>
<dbReference type="PDBsum" id="5QZ2"/>
<dbReference type="PDBsum" id="5QZ3"/>
<dbReference type="PDBsum" id="5QZ4"/>
<dbReference type="PDBsum" id="5QZ5"/>
<dbReference type="PDBsum" id="5QZ6"/>
<dbReference type="PDBsum" id="5QZ7"/>
<dbReference type="PDBsum" id="5QZ8"/>
<dbReference type="PDBsum" id="5QZ9"/>
<dbReference type="PDBsum" id="5QZA"/>
<dbReference type="PDBsum" id="5QZB"/>
<dbReference type="PDBsum" id="5QZC"/>
<dbReference type="PDBsum" id="5QZD"/>
<dbReference type="PDBsum" id="5QZE"/>
<dbReference type="PDBsum" id="5QZF"/>
<dbReference type="PDBsum" id="5QZG"/>
<dbReference type="PDBsum" id="5QZH"/>
<dbReference type="PDBsum" id="5QZI"/>
<dbReference type="PDBsum" id="5QZJ"/>
<dbReference type="PDBsum" id="5QZK"/>
<dbReference type="PDBsum" id="5QZL"/>
<dbReference type="PDBsum" id="5QZM"/>
<dbReference type="PDBsum" id="5QZN"/>
<dbReference type="PDBsum" id="5QZO"/>
<dbReference type="PDBsum" id="5QZP"/>
<dbReference type="PDBsum" id="5QZQ"/>
<dbReference type="PDBsum" id="5QZR"/>
<dbReference type="PDBsum" id="5QZS"/>
<dbReference type="PDBsum" id="5QZT"/>
<dbReference type="PDBsum" id="5QZU"/>
<dbReference type="PDBsum" id="5QZV"/>
<dbReference type="PDBsum" id="5QZW"/>
<dbReference type="PDBsum" id="5QZX"/>
<dbReference type="PDBsum" id="5QZY"/>
<dbReference type="PDBsum" id="5QZZ"/>
<dbReference type="PDBsum" id="5R00"/>
<dbReference type="PDBsum" id="5R01"/>
<dbReference type="PDBsum" id="5R02"/>
<dbReference type="PDBsum" id="5R03"/>
<dbReference type="PDBsum" id="5R04"/>
<dbReference type="PDBsum" id="5R05"/>
<dbReference type="PDBsum" id="5R06"/>
<dbReference type="PDBsum" id="5R07"/>
<dbReference type="PDBsum" id="5R08"/>
<dbReference type="PDBsum" id="5R09"/>
<dbReference type="PDBsum" id="5R0A"/>
<dbReference type="PDBsum" id="5R0B"/>
<dbReference type="PDBsum" id="5R0C"/>
<dbReference type="PDBsum" id="5R0D"/>
<dbReference type="PDBsum" id="5R0E"/>
<dbReference type="PDBsum" id="5R0F"/>
<dbReference type="PDBsum" id="5R0G"/>
<dbReference type="PDBsum" id="5R0H"/>
<dbReference type="PDBsum" id="5R0I"/>
<dbReference type="PDBsum" id="5R0J"/>
<dbReference type="PDBsum" id="5R0K"/>
<dbReference type="PDBsum" id="5R0L"/>
<dbReference type="PDBsum" id="5R0M"/>
<dbReference type="PDBsum" id="5R0N"/>
<dbReference type="PDBsum" id="5R0O"/>
<dbReference type="PDBsum" id="5R0P"/>
<dbReference type="PDBsum" id="5R0Q"/>
<dbReference type="PDBsum" id="5R0R"/>
<dbReference type="PDBsum" id="5R0S"/>
<dbReference type="PDBsum" id="5R0T"/>
<dbReference type="PDBsum" id="5R0U"/>
<dbReference type="PDBsum" id="5R0V"/>
<dbReference type="PDBsum" id="5R0W"/>
<dbReference type="PDBsum" id="5R0X"/>
<dbReference type="PDBsum" id="5R0Y"/>
<dbReference type="PDBsum" id="5R0Z"/>
<dbReference type="PDBsum" id="5R10"/>
<dbReference type="PDBsum" id="5R11"/>
<dbReference type="PDBsum" id="5R12"/>
<dbReference type="PDBsum" id="5R13"/>
<dbReference type="PDBsum" id="5R14"/>
<dbReference type="PDBsum" id="5R15"/>
<dbReference type="PDBsum" id="5R16"/>
<dbReference type="PDBsum" id="5R17"/>
<dbReference type="PDBsum" id="5R18"/>
<dbReference type="PDBsum" id="5R19"/>
<dbReference type="PDBsum" id="5R1A"/>
<dbReference type="PDBsum" id="5R1B"/>
<dbReference type="PDBsum" id="5R1C"/>
<dbReference type="PDBsum" id="5R1D"/>
<dbReference type="PDBsum" id="5R1E"/>
<dbReference type="PDBsum" id="5R1F"/>
<dbReference type="PDBsum" id="5R1G"/>
<dbReference type="PDBsum" id="5R1H"/>
<dbReference type="PDBsum" id="5R1I"/>
<dbReference type="PDBsum" id="5R1J"/>
<dbReference type="PDBsum" id="5R1K"/>
<dbReference type="PDBsum" id="5R1L"/>
<dbReference type="PDBsum" id="5R1M"/>
<dbReference type="PDBsum" id="5R1N"/>
<dbReference type="PDBsum" id="5R1O"/>
<dbReference type="PDBsum" id="5R1P"/>
<dbReference type="PDBsum" id="5R1Q"/>
<dbReference type="PDBsum" id="5R1S"/>
<dbReference type="PDBsum" id="5ST0"/>
<dbReference type="PDBsum" id="5ST1"/>
<dbReference type="PDBsum" id="5ST2"/>
<dbReference type="PDBsum" id="5ST3"/>
<dbReference type="PDBsum" id="5ST4"/>
<dbReference type="PDBsum" id="5ST5"/>
<dbReference type="PDBsum" id="5ST6"/>
<dbReference type="PDBsum" id="5ST7"/>
<dbReference type="PDBsum" id="5ST8"/>
<dbReference type="PDBsum" id="5ST9"/>
<dbReference type="PDBsum" id="5STA"/>
<dbReference type="PDBsum" id="5STB"/>
<dbReference type="PDBsum" id="5STC"/>
<dbReference type="PDBsum" id="5STE"/>
<dbReference type="PDBsum" id="5STF"/>
<dbReference type="PDBsum" id="5STG"/>
<dbReference type="PDBsum" id="5STH"/>
<dbReference type="PDBsum" id="5STI"/>
<dbReference type="PDBsum" id="5STJ"/>
<dbReference type="PDBsum" id="5STK"/>
<dbReference type="PDBsum" id="5STL"/>
<dbReference type="PDBsum" id="5STM"/>
<dbReference type="PDBsum" id="5STN"/>
<dbReference type="PDBsum" id="5STO"/>
<dbReference type="PDBsum" id="5STP"/>
<dbReference type="PDBsum" id="5STQ"/>
<dbReference type="PDBsum" id="5STR"/>
<dbReference type="PDBsum" id="5STS"/>
<dbReference type="PDBsum" id="5STT"/>
<dbReference type="PDBsum" id="5STU"/>
<dbReference type="PDBsum" id="5STV"/>
<dbReference type="PDBsum" id="5STW"/>
<dbReference type="PDBsum" id="5STX"/>
<dbReference type="PDBsum" id="5STY"/>
<dbReference type="PDBsum" id="5STZ"/>
<dbReference type="PDBsum" id="5SU0"/>
<dbReference type="PDBsum" id="5SU1"/>
<dbReference type="PDBsum" id="5SU2"/>
<dbReference type="PDBsum" id="5SU3"/>
<dbReference type="PDBsum" id="5SU4"/>
<dbReference type="PDBsum" id="5SU5"/>
<dbReference type="PDBsum" id="5SU6"/>
<dbReference type="PDBsum" id="5SU7"/>
<dbReference type="PDBsum" id="5SU8"/>
<dbReference type="PDBsum" id="5SU9"/>
<dbReference type="PDBsum" id="5SUA"/>
<dbReference type="PDBsum" id="5SUB"/>
<dbReference type="PDBsum" id="5SUC"/>
<dbReference type="PDBsum" id="5SUD"/>
<dbReference type="PDBsum" id="5SUE"/>
<dbReference type="PDBsum" id="5SUF"/>
<dbReference type="PDBsum" id="5SUG"/>
<dbReference type="PDBsum" id="5WSG"/>
<dbReference type="PDBsum" id="5Y88"/>
<dbReference type="PDBsum" id="5YLZ"/>
<dbReference type="PDBsum" id="5ZWM"/>
<dbReference type="PDBsum" id="5ZWO"/>
<dbReference type="PDBsum" id="6BK8"/>
<dbReference type="PDBsum" id="6EXN"/>
<dbReference type="PDBsum" id="6J6G"/>
<dbReference type="PDBsum" id="6J6H"/>
<dbReference type="PDBsum" id="6J6N"/>
<dbReference type="PDBsum" id="6J6Q"/>
<dbReference type="PDBsum" id="6TEO"/>
<dbReference type="PDBsum" id="7B9V"/>
<dbReference type="PDBsum" id="7FJU"/>
<dbReference type="PDBsum" id="7FJV"/>
<dbReference type="PDBsum" id="7FJW"/>
<dbReference type="PDBsum" id="7FJX"/>
<dbReference type="PDBsum" id="7FJY"/>
<dbReference type="PDBsum" id="7FJZ"/>
<dbReference type="PDBsum" id="7FK0"/>
<dbReference type="PDBsum" id="7FK1"/>
<dbReference type="PDBsum" id="7FK2"/>
<dbReference type="PDBsum" id="7FK3"/>
<dbReference type="PDBsum" id="7FK4"/>
<dbReference type="PDBsum" id="7FK5"/>
<dbReference type="PDBsum" id="7FK6"/>
<dbReference type="PDBsum" id="7FK7"/>
<dbReference type="PDBsum" id="7FK8"/>
<dbReference type="PDBsum" id="7FK9"/>
<dbReference type="PDBsum" id="7FKA"/>
<dbReference type="PDBsum" id="7FKB"/>
<dbReference type="PDBsum" id="7FKC"/>
<dbReference type="PDBsum" id="7FKD"/>
<dbReference type="PDBsum" id="7FKE"/>
<dbReference type="PDBsum" id="7FKF"/>
<dbReference type="PDBsum" id="7FKG"/>
<dbReference type="PDBsum" id="7FKH"/>
<dbReference type="PDBsum" id="7FKI"/>
<dbReference type="PDBsum" id="7FKJ"/>
<dbReference type="PDBsum" id="7FKK"/>
<dbReference type="PDBsum" id="7FKL"/>
<dbReference type="PDBsum" id="7FKM"/>
<dbReference type="PDBsum" id="7FKN"/>
<dbReference type="PDBsum" id="7FKO"/>
<dbReference type="PDBsum" id="7FKP"/>
<dbReference type="PDBsum" id="7FKQ"/>
<dbReference type="PDBsum" id="7FKR"/>
<dbReference type="PDBsum" id="7FKS"/>
<dbReference type="PDBsum" id="7FKT"/>
<dbReference type="PDBsum" id="7FKU"/>
<dbReference type="PDBsum" id="7FKV"/>
<dbReference type="PDBsum" id="7FKW"/>
<dbReference type="PDBsum" id="7FKX"/>
<dbReference type="PDBsum" id="7FKY"/>
<dbReference type="PDBsum" id="7FKZ"/>
<dbReference type="PDBsum" id="7FL0"/>
<dbReference type="PDBsum" id="7FL1"/>
<dbReference type="PDBsum" id="7FL2"/>
<dbReference type="PDBsum" id="7FL3"/>
<dbReference type="PDBsum" id="7FL4"/>
<dbReference type="PDBsum" id="7FL5"/>
<dbReference type="PDBsum" id="7FL6"/>
<dbReference type="PDBsum" id="7FL7"/>
<dbReference type="PDBsum" id="7FL8"/>
<dbReference type="PDBsum" id="7FL9"/>
<dbReference type="PDBsum" id="7FLA"/>
<dbReference type="PDBsum" id="7FLB"/>
<dbReference type="PDBsum" id="7FLC"/>
<dbReference type="PDBsum" id="7FLD"/>
<dbReference type="PDBsum" id="7FLE"/>
<dbReference type="PDBsum" id="7FLF"/>
<dbReference type="PDBsum" id="7FLG"/>
<dbReference type="PDBsum" id="7FLH"/>
<dbReference type="PDBsum" id="7FLI"/>
<dbReference type="PDBsum" id="7FLJ"/>
<dbReference type="PDBsum" id="7FLK"/>
<dbReference type="PDBsum" id="7FLL"/>
<dbReference type="PDBsum" id="7FLM"/>
<dbReference type="PDBsum" id="7FLN"/>
<dbReference type="PDBsum" id="7FLO"/>
<dbReference type="PDBsum" id="7FLP"/>
<dbReference type="PDBsum" id="7FLQ"/>
<dbReference type="PDBsum" id="7FLR"/>
<dbReference type="PDBsum" id="7FLS"/>
<dbReference type="PDBsum" id="7FLT"/>
<dbReference type="PDBsum" id="7FLU"/>
<dbReference type="PDBsum" id="7FLV"/>
<dbReference type="PDBsum" id="7FLW"/>
<dbReference type="PDBsum" id="7FLX"/>
<dbReference type="PDBsum" id="7FLY"/>
<dbReference type="PDBsum" id="7FLZ"/>
<dbReference type="PDBsum" id="7FM0"/>
<dbReference type="PDBsum" id="7FM1"/>
<dbReference type="PDBsum" id="7FM2"/>
<dbReference type="PDBsum" id="7FM3"/>
<dbReference type="PDBsum" id="7FM4"/>
<dbReference type="PDBsum" id="7FM5"/>
<dbReference type="PDBsum" id="7FM6"/>
<dbReference type="PDBsum" id="7FM7"/>
<dbReference type="PDBsum" id="7FM8"/>
<dbReference type="PDBsum" id="7FM9"/>
<dbReference type="PDBsum" id="7FMA"/>
<dbReference type="PDBsum" id="7FMB"/>
<dbReference type="PDBsum" id="7FMC"/>
<dbReference type="PDBsum" id="7FMD"/>
<dbReference type="PDBsum" id="7FME"/>
<dbReference type="PDBsum" id="7FMF"/>
<dbReference type="PDBsum" id="7FMG"/>
<dbReference type="PDBsum" id="7FMH"/>
<dbReference type="PDBsum" id="7FMI"/>
<dbReference type="PDBsum" id="7FMJ"/>
<dbReference type="PDBsum" id="7FMK"/>
<dbReference type="PDBsum" id="7FML"/>
<dbReference type="PDBsum" id="7FMM"/>
<dbReference type="PDBsum" id="7FMN"/>
<dbReference type="PDBsum" id="7FMO"/>
<dbReference type="PDBsum" id="7FMP"/>
<dbReference type="PDBsum" id="7FMQ"/>
<dbReference type="PDBsum" id="7FMR"/>
<dbReference type="PDBsum" id="7FMS"/>
<dbReference type="PDBsum" id="7FMT"/>
<dbReference type="PDBsum" id="7FMU"/>
<dbReference type="PDBsum" id="7FMV"/>
<dbReference type="PDBsum" id="7FMW"/>
<dbReference type="PDBsum" id="7FMX"/>
<dbReference type="PDBsum" id="7FMY"/>
<dbReference type="PDBsum" id="7FMZ"/>
<dbReference type="PDBsum" id="7FN0"/>
<dbReference type="PDBsum" id="7FN1"/>
<dbReference type="PDBsum" id="7FN2"/>
<dbReference type="PDBsum" id="7FN3"/>
<dbReference type="PDBsum" id="7FN4"/>
<dbReference type="PDBsum" id="7FN5"/>
<dbReference type="PDBsum" id="7FN6"/>
<dbReference type="PDBsum" id="7FN7"/>
<dbReference type="PDBsum" id="7FN8"/>
<dbReference type="PDBsum" id="7FN9"/>
<dbReference type="PDBsum" id="7FNA"/>
<dbReference type="PDBsum" id="7FNB"/>
<dbReference type="PDBsum" id="7FNC"/>
<dbReference type="PDBsum" id="7FND"/>
<dbReference type="PDBsum" id="7FNE"/>
<dbReference type="PDBsum" id="7FNF"/>
<dbReference type="PDBsum" id="7FNG"/>
<dbReference type="PDBsum" id="7FNH"/>
<dbReference type="PDBsum" id="7FNI"/>
<dbReference type="PDBsum" id="7FNJ"/>
<dbReference type="PDBsum" id="7FNK"/>
<dbReference type="PDBsum" id="7FNL"/>
<dbReference type="PDBsum" id="7FNM"/>
<dbReference type="PDBsum" id="7FNN"/>
<dbReference type="PDBsum" id="7FNO"/>
<dbReference type="PDBsum" id="7FNP"/>
<dbReference type="PDBsum" id="7FNQ"/>
<dbReference type="PDBsum" id="7FNR"/>
<dbReference type="PDBsum" id="7FNS"/>
<dbReference type="PDBsum" id="7FNT"/>
<dbReference type="PDBsum" id="7FNU"/>
<dbReference type="PDBsum" id="7FNV"/>
<dbReference type="PDBsum" id="7FNW"/>
<dbReference type="PDBsum" id="7FNX"/>
<dbReference type="PDBsum" id="7FNY"/>
<dbReference type="PDBsum" id="7FNZ"/>
<dbReference type="PDBsum" id="7FO0"/>
<dbReference type="PDBsum" id="7FO1"/>
<dbReference type="PDBsum" id="7FO2"/>
<dbReference type="PDBsum" id="7FO3"/>
<dbReference type="PDBsum" id="7FO4"/>
<dbReference type="PDBsum" id="7FO5"/>
<dbReference type="PDBsum" id="7FO6"/>
<dbReference type="PDBsum" id="7FO7"/>
<dbReference type="PDBsum" id="7FO8"/>
<dbReference type="PDBsum" id="7FO9"/>
<dbReference type="PDBsum" id="7FOA"/>
<dbReference type="PDBsum" id="7FOB"/>
<dbReference type="PDBsum" id="7FOC"/>
<dbReference type="PDBsum" id="7FOD"/>
<dbReference type="PDBsum" id="7FOE"/>
<dbReference type="PDBsum" id="7FOF"/>
<dbReference type="PDBsum" id="7FOG"/>
<dbReference type="PDBsum" id="7FOH"/>
<dbReference type="PDBsum" id="7FOI"/>
<dbReference type="PDBsum" id="7FOJ"/>
<dbReference type="PDBsum" id="7FOK"/>
<dbReference type="PDBsum" id="7FOL"/>
<dbReference type="PDBsum" id="7FOM"/>
<dbReference type="PDBsum" id="7FON"/>
<dbReference type="PDBsum" id="7FOO"/>
<dbReference type="PDBsum" id="7FOP"/>
<dbReference type="PDBsum" id="7FOQ"/>
<dbReference type="PDBsum" id="7FOR"/>
<dbReference type="PDBsum" id="7FOS"/>
<dbReference type="PDBsum" id="7FOT"/>
<dbReference type="PDBsum" id="7FOU"/>
<dbReference type="PDBsum" id="7FOV"/>
<dbReference type="PDBsum" id="7FOW"/>
<dbReference type="PDBsum" id="7FOX"/>
<dbReference type="PDBsum" id="7FOY"/>
<dbReference type="PDBsum" id="7FOZ"/>
<dbReference type="PDBsum" id="7FP0"/>
<dbReference type="PDBsum" id="7FP1"/>
<dbReference type="PDBsum" id="7FP2"/>
<dbReference type="PDBsum" id="7FP3"/>
<dbReference type="PDBsum" id="7FP4"/>
<dbReference type="PDBsum" id="7FP5"/>
<dbReference type="PDBsum" id="7FP6"/>
<dbReference type="PDBsum" id="7FP7"/>
<dbReference type="PDBsum" id="7FP8"/>
<dbReference type="PDBsum" id="7FP9"/>
<dbReference type="PDBsum" id="7FPA"/>
<dbReference type="PDBsum" id="7FPB"/>
<dbReference type="PDBsum" id="7FPC"/>
<dbReference type="PDBsum" id="7FPD"/>
<dbReference type="PDBsum" id="7FPE"/>
<dbReference type="PDBsum" id="7FPF"/>
<dbReference type="PDBsum" id="7FPG"/>
<dbReference type="PDBsum" id="7FPH"/>
<dbReference type="PDBsum" id="7FPI"/>
<dbReference type="PDBsum" id="7FPJ"/>
<dbReference type="PDBsum" id="7FPK"/>
<dbReference type="PDBsum" id="9DTR"/>
<dbReference type="EMDB" id="EMD-0686"/>
<dbReference type="EMDB" id="EMD-0687"/>
<dbReference type="EMDB" id="EMD-0691"/>
<dbReference type="EMDB" id="EMD-0692"/>
<dbReference type="EMDB" id="EMD-12106"/>
<dbReference type="EMDB" id="EMD-3539"/>
<dbReference type="EMDB" id="EMD-3541"/>
<dbReference type="EMDB" id="EMD-3683"/>
<dbReference type="EMDB" id="EMD-3979"/>
<dbReference type="EMDB" id="EMD-4055"/>
<dbReference type="EMDB" id="EMD-4057"/>
<dbReference type="EMDB" id="EMD-47157"/>
<dbReference type="EMDB" id="EMD-6817"/>
<dbReference type="EMDB" id="EMD-6839"/>
<dbReference type="EMDB" id="EMD-6972"/>
<dbReference type="EMDB" id="EMD-6974"/>
<dbReference type="EMDB" id="EMD-7109"/>
<dbReference type="EMDB" id="EMD-8011"/>
<dbReference type="EMDB" id="EMD-8012"/>
<dbReference type="EMDB" id="EMD-8013"/>
<dbReference type="EMDB" id="EMD-8014"/>
<dbReference type="EMDB" id="EMD-9524"/>
<dbReference type="EMDB" id="EMD-9525"/>
<dbReference type="SMR" id="P33334"/>
<dbReference type="BioGRID" id="36599">
    <property type="interactions" value="259"/>
</dbReference>
<dbReference type="ComplexPortal" id="CPX-1651">
    <property type="entry name" value="PRP19-associated complex"/>
</dbReference>
<dbReference type="ComplexPortal" id="CPX-25">
    <property type="entry name" value="U4/U6.U5 tri-small nuclear ribonucleoprotein complex"/>
</dbReference>
<dbReference type="ComplexPortal" id="CPX-29">
    <property type="entry name" value="U5 small nuclear ribonucleoprotein complex"/>
</dbReference>
<dbReference type="ComplexPortal" id="CPX-30">
    <property type="entry name" value="U5 small nuclear ribonucleoprotein complex, AAR2 variant"/>
</dbReference>
<dbReference type="DIP" id="DIP-2427N"/>
<dbReference type="FunCoup" id="P33334">
    <property type="interactions" value="1600"/>
</dbReference>
<dbReference type="IntAct" id="P33334">
    <property type="interactions" value="85"/>
</dbReference>
<dbReference type="MINT" id="P33334"/>
<dbReference type="STRING" id="4932.YHR165C"/>
<dbReference type="CarbonylDB" id="P33334"/>
<dbReference type="GlyGen" id="P33334">
    <property type="glycosylation" value="1 site, 1 O-linked glycan (1 site)"/>
</dbReference>
<dbReference type="iPTMnet" id="P33334"/>
<dbReference type="PaxDb" id="4932-YHR165C"/>
<dbReference type="PeptideAtlas" id="P33334"/>
<dbReference type="EnsemblFungi" id="YHR165C_mRNA">
    <property type="protein sequence ID" value="YHR165C"/>
    <property type="gene ID" value="YHR165C"/>
</dbReference>
<dbReference type="GeneID" id="856570"/>
<dbReference type="KEGG" id="sce:YHR165C"/>
<dbReference type="AGR" id="SGD:S000001208"/>
<dbReference type="SGD" id="S000001208">
    <property type="gene designation" value="PRP8"/>
</dbReference>
<dbReference type="VEuPathDB" id="FungiDB:YHR165C"/>
<dbReference type="eggNOG" id="KOG1795">
    <property type="taxonomic scope" value="Eukaryota"/>
</dbReference>
<dbReference type="GeneTree" id="ENSGT00390000015210"/>
<dbReference type="HOGENOM" id="CLU_000380_3_0_1"/>
<dbReference type="InParanoid" id="P33334"/>
<dbReference type="OMA" id="ANKWNTS"/>
<dbReference type="OrthoDB" id="1931567at2759"/>
<dbReference type="BioCyc" id="YEAST:G3O-31199-MONOMER"/>
<dbReference type="BRENDA" id="3.1.13.2">
    <property type="organism ID" value="984"/>
</dbReference>
<dbReference type="BioGRID-ORCS" id="856570">
    <property type="hits" value="3 hits in 10 CRISPR screens"/>
</dbReference>
<dbReference type="EvolutionaryTrace" id="P33334"/>
<dbReference type="PRO" id="PR:P33334"/>
<dbReference type="Proteomes" id="UP000002311">
    <property type="component" value="Chromosome VIII"/>
</dbReference>
<dbReference type="RNAct" id="P33334">
    <property type="molecule type" value="protein"/>
</dbReference>
<dbReference type="GO" id="GO:0071013">
    <property type="term" value="C:catalytic step 2 spliceosome"/>
    <property type="evidence" value="ECO:0000318"/>
    <property type="project" value="GO_Central"/>
</dbReference>
<dbReference type="GO" id="GO:0005737">
    <property type="term" value="C:cytoplasm"/>
    <property type="evidence" value="ECO:0000303"/>
    <property type="project" value="ComplexPortal"/>
</dbReference>
<dbReference type="GO" id="GO:0005634">
    <property type="term" value="C:nucleus"/>
    <property type="evidence" value="ECO:0000314"/>
    <property type="project" value="SGD"/>
</dbReference>
<dbReference type="GO" id="GO:0000974">
    <property type="term" value="C:Prp19 complex"/>
    <property type="evidence" value="ECO:0000353"/>
    <property type="project" value="ComplexPortal"/>
</dbReference>
<dbReference type="GO" id="GO:0005681">
    <property type="term" value="C:spliceosomal complex"/>
    <property type="evidence" value="ECO:0000303"/>
    <property type="project" value="ComplexPortal"/>
</dbReference>
<dbReference type="GO" id="GO:0046540">
    <property type="term" value="C:U4/U6 x U5 tri-snRNP complex"/>
    <property type="evidence" value="ECO:0000314"/>
    <property type="project" value="SGD"/>
</dbReference>
<dbReference type="GO" id="GO:0005682">
    <property type="term" value="C:U5 snRNP"/>
    <property type="evidence" value="ECO:0000314"/>
    <property type="project" value="SGD"/>
</dbReference>
<dbReference type="GO" id="GO:0008237">
    <property type="term" value="F:metallopeptidase activity"/>
    <property type="evidence" value="ECO:0007669"/>
    <property type="project" value="InterPro"/>
</dbReference>
<dbReference type="GO" id="GO:0003729">
    <property type="term" value="F:mRNA binding"/>
    <property type="evidence" value="ECO:0007005"/>
    <property type="project" value="SGD"/>
</dbReference>
<dbReference type="GO" id="GO:0097157">
    <property type="term" value="F:pre-mRNA intronic binding"/>
    <property type="evidence" value="ECO:0000314"/>
    <property type="project" value="SGD"/>
</dbReference>
<dbReference type="GO" id="GO:0030619">
    <property type="term" value="F:U1 snRNA binding"/>
    <property type="evidence" value="ECO:0000314"/>
    <property type="project" value="SGD"/>
</dbReference>
<dbReference type="GO" id="GO:0030620">
    <property type="term" value="F:U2 snRNA binding"/>
    <property type="evidence" value="ECO:0000314"/>
    <property type="project" value="SGD"/>
</dbReference>
<dbReference type="GO" id="GO:0030623">
    <property type="term" value="F:U5 snRNA binding"/>
    <property type="evidence" value="ECO:0000314"/>
    <property type="project" value="SGD"/>
</dbReference>
<dbReference type="GO" id="GO:0017070">
    <property type="term" value="F:U6 snRNA binding"/>
    <property type="evidence" value="ECO:0000314"/>
    <property type="project" value="SGD"/>
</dbReference>
<dbReference type="GO" id="GO:0000350">
    <property type="term" value="P:generation of catalytic spliceosome for second transesterification step"/>
    <property type="evidence" value="ECO:0000315"/>
    <property type="project" value="SGD"/>
</dbReference>
<dbReference type="GO" id="GO:0000389">
    <property type="term" value="P:mRNA 3'-splice site recognition"/>
    <property type="evidence" value="ECO:0000315"/>
    <property type="project" value="SGD"/>
</dbReference>
<dbReference type="GO" id="GO:0000395">
    <property type="term" value="P:mRNA 5'-splice site recognition"/>
    <property type="evidence" value="ECO:0000315"/>
    <property type="project" value="SGD"/>
</dbReference>
<dbReference type="GO" id="GO:0000398">
    <property type="term" value="P:mRNA splicing, via spliceosome"/>
    <property type="evidence" value="ECO:0000303"/>
    <property type="project" value="ComplexPortal"/>
</dbReference>
<dbReference type="GO" id="GO:0000387">
    <property type="term" value="P:spliceosomal snRNP assembly"/>
    <property type="evidence" value="ECO:0000303"/>
    <property type="project" value="ComplexPortal"/>
</dbReference>
<dbReference type="GO" id="GO:0000244">
    <property type="term" value="P:spliceosomal tri-snRNP complex assembly"/>
    <property type="evidence" value="ECO:0000314"/>
    <property type="project" value="SGD"/>
</dbReference>
<dbReference type="CDD" id="cd08056">
    <property type="entry name" value="MPN_PRP8"/>
    <property type="match status" value="1"/>
</dbReference>
<dbReference type="CDD" id="cd13838">
    <property type="entry name" value="RNase_H_like_Prp8_IV"/>
    <property type="match status" value="1"/>
</dbReference>
<dbReference type="DisProt" id="DP02722"/>
<dbReference type="FunFam" id="3.30.420.230:FF:000001">
    <property type="entry name" value="Pre-mRNA-processing-splicing factor 8"/>
    <property type="match status" value="1"/>
</dbReference>
<dbReference type="FunFam" id="3.40.140.10:FF:000002">
    <property type="entry name" value="Pre-mRNA-processing-splicing factor 8"/>
    <property type="match status" value="1"/>
</dbReference>
<dbReference type="FunFam" id="3.90.1570.40:FF:000001">
    <property type="entry name" value="Pre-mRNA-processing-splicing factor 8"/>
    <property type="match status" value="1"/>
</dbReference>
<dbReference type="Gene3D" id="1.20.80.40">
    <property type="match status" value="1"/>
</dbReference>
<dbReference type="Gene3D" id="3.30.420.230">
    <property type="match status" value="1"/>
</dbReference>
<dbReference type="Gene3D" id="3.90.1570.40">
    <property type="match status" value="1"/>
</dbReference>
<dbReference type="Gene3D" id="3.40.140.10">
    <property type="entry name" value="Cytidine Deaminase, domain 2"/>
    <property type="match status" value="1"/>
</dbReference>
<dbReference type="Gene3D" id="3.30.43.40">
    <property type="entry name" value="Pre-mRNA-processing-splicing factor 8, U5-snRNA-binding domain"/>
    <property type="match status" value="1"/>
</dbReference>
<dbReference type="InterPro" id="IPR000555">
    <property type="entry name" value="JAMM/MPN+_dom"/>
</dbReference>
<dbReference type="InterPro" id="IPR037518">
    <property type="entry name" value="MPN"/>
</dbReference>
<dbReference type="InterPro" id="IPR012591">
    <property type="entry name" value="PRO8NT"/>
</dbReference>
<dbReference type="InterPro" id="IPR012592">
    <property type="entry name" value="PROCN"/>
</dbReference>
<dbReference type="InterPro" id="IPR012984">
    <property type="entry name" value="PROCT"/>
</dbReference>
<dbReference type="InterPro" id="IPR027652">
    <property type="entry name" value="PRP8"/>
</dbReference>
<dbReference type="InterPro" id="IPR021983">
    <property type="entry name" value="PRP8_domainIV"/>
</dbReference>
<dbReference type="InterPro" id="IPR043173">
    <property type="entry name" value="Prp8_domainIV_fingers"/>
</dbReference>
<dbReference type="InterPro" id="IPR043172">
    <property type="entry name" value="Prp8_domainIV_palm"/>
</dbReference>
<dbReference type="InterPro" id="IPR019581">
    <property type="entry name" value="Prp8_U5-snRNA-bd"/>
</dbReference>
<dbReference type="InterPro" id="IPR042516">
    <property type="entry name" value="Prp8_U5-snRNA-bd_sf"/>
</dbReference>
<dbReference type="InterPro" id="IPR019580">
    <property type="entry name" value="Prp8_U6-snRNA-bd"/>
</dbReference>
<dbReference type="InterPro" id="IPR012337">
    <property type="entry name" value="RNaseH-like_sf"/>
</dbReference>
<dbReference type="InterPro" id="IPR019582">
    <property type="entry name" value="RRM_spliceosomal_PrP8"/>
</dbReference>
<dbReference type="PANTHER" id="PTHR11140">
    <property type="entry name" value="PRE-MRNA SPLICING FACTOR PRP8"/>
    <property type="match status" value="1"/>
</dbReference>
<dbReference type="PANTHER" id="PTHR11140:SF0">
    <property type="entry name" value="PRE-MRNA-PROCESSING-SPLICING FACTOR 8"/>
    <property type="match status" value="1"/>
</dbReference>
<dbReference type="Pfam" id="PF08082">
    <property type="entry name" value="PRO8NT"/>
    <property type="match status" value="1"/>
</dbReference>
<dbReference type="Pfam" id="PF08083">
    <property type="entry name" value="PROCN"/>
    <property type="match status" value="1"/>
</dbReference>
<dbReference type="Pfam" id="PF08084">
    <property type="entry name" value="PROCT"/>
    <property type="match status" value="1"/>
</dbReference>
<dbReference type="Pfam" id="PF12134">
    <property type="entry name" value="PRP8_domainIV"/>
    <property type="match status" value="1"/>
</dbReference>
<dbReference type="Pfam" id="PF10598">
    <property type="entry name" value="RRM_4"/>
    <property type="match status" value="1"/>
</dbReference>
<dbReference type="Pfam" id="PF10597">
    <property type="entry name" value="U5_2-snRNA_bdg"/>
    <property type="match status" value="1"/>
</dbReference>
<dbReference type="Pfam" id="PF10596">
    <property type="entry name" value="U6-snRNA_bdg"/>
    <property type="match status" value="1"/>
</dbReference>
<dbReference type="SMART" id="SM00232">
    <property type="entry name" value="JAB_MPN"/>
    <property type="match status" value="1"/>
</dbReference>
<dbReference type="SUPFAM" id="SSF53098">
    <property type="entry name" value="Ribonuclease H-like"/>
    <property type="match status" value="2"/>
</dbReference>
<dbReference type="PROSITE" id="PS50249">
    <property type="entry name" value="MPN"/>
    <property type="match status" value="1"/>
</dbReference>